<feature type="chain" id="PRO_0000081591" description="RNA-binding protein FUS">
    <location>
        <begin position="1"/>
        <end position="526"/>
    </location>
</feature>
<feature type="domain" description="RRM" evidence="2">
    <location>
        <begin position="285"/>
        <end position="371"/>
    </location>
</feature>
<feature type="zinc finger region" description="RanBP2-type" evidence="3">
    <location>
        <begin position="422"/>
        <end position="453"/>
    </location>
</feature>
<feature type="region of interest" description="Disordered" evidence="4">
    <location>
        <begin position="1"/>
        <end position="286"/>
    </location>
</feature>
<feature type="region of interest" description="Disordered" evidence="4">
    <location>
        <begin position="375"/>
        <end position="424"/>
    </location>
</feature>
<feature type="region of interest" description="Disordered" evidence="4">
    <location>
        <begin position="444"/>
        <end position="526"/>
    </location>
</feature>
<feature type="compositionally biased region" description="Polar residues" evidence="4">
    <location>
        <begin position="1"/>
        <end position="14"/>
    </location>
</feature>
<feature type="compositionally biased region" description="Low complexity" evidence="4">
    <location>
        <begin position="17"/>
        <end position="75"/>
    </location>
</feature>
<feature type="compositionally biased region" description="Low complexity" evidence="4">
    <location>
        <begin position="83"/>
        <end position="164"/>
    </location>
</feature>
<feature type="compositionally biased region" description="Gly residues" evidence="4">
    <location>
        <begin position="165"/>
        <end position="177"/>
    </location>
</feature>
<feature type="compositionally biased region" description="Gly residues" evidence="4">
    <location>
        <begin position="186"/>
        <end position="209"/>
    </location>
</feature>
<feature type="compositionally biased region" description="Gly residues" evidence="4">
    <location>
        <begin position="217"/>
        <end position="232"/>
    </location>
</feature>
<feature type="compositionally biased region" description="Gly residues" evidence="4">
    <location>
        <begin position="244"/>
        <end position="259"/>
    </location>
</feature>
<feature type="compositionally biased region" description="Gly residues" evidence="4">
    <location>
        <begin position="377"/>
        <end position="421"/>
    </location>
</feature>
<feature type="compositionally biased region" description="Gly residues" evidence="4">
    <location>
        <begin position="454"/>
        <end position="468"/>
    </location>
</feature>
<feature type="compositionally biased region" description="Basic and acidic residues" evidence="4">
    <location>
        <begin position="469"/>
        <end position="493"/>
    </location>
</feature>
<feature type="compositionally biased region" description="Gly residues" evidence="4">
    <location>
        <begin position="494"/>
        <end position="508"/>
    </location>
</feature>
<feature type="compositionally biased region" description="Basic and acidic residues" evidence="4">
    <location>
        <begin position="511"/>
        <end position="526"/>
    </location>
</feature>
<feature type="site" description="Breakpoint for translocation to form chimeric FUS/ATF1 protein">
    <location>
        <position position="175"/>
    </location>
</feature>
<feature type="site" description="Breakpoint for translocation to form FUS/TLS-CHOP oncogene">
    <location>
        <begin position="266"/>
        <end position="267"/>
    </location>
</feature>
<feature type="modified residue" description="Phosphoserine" evidence="24">
    <location>
        <position position="26"/>
    </location>
</feature>
<feature type="modified residue" description="Phosphoserine" evidence="24">
    <location>
        <position position="30"/>
    </location>
</feature>
<feature type="modified residue" description="Phosphoserine; by ATM" evidence="10">
    <location>
        <position position="42"/>
    </location>
</feature>
<feature type="modified residue" description="Asymmetric dimethylarginine; alternate" evidence="35">
    <location>
        <position position="216"/>
    </location>
</feature>
<feature type="modified residue" description="Omega-N-methylarginine; alternate" evidence="35">
    <location>
        <position position="216"/>
    </location>
</feature>
<feature type="modified residue" description="Asymmetric dimethylarginine; alternate" evidence="35">
    <location>
        <position position="218"/>
    </location>
</feature>
<feature type="modified residue" description="Omega-N-methylarginine; alternate" evidence="35">
    <location>
        <position position="218"/>
    </location>
</feature>
<feature type="modified residue" description="Phosphoserine" evidence="33">
    <location>
        <position position="221"/>
    </location>
</feature>
<feature type="modified residue" description="Asymmetric dimethylarginine" evidence="7">
    <location>
        <position position="242"/>
    </location>
</feature>
<feature type="modified residue" description="Asymmetric dimethylarginine" evidence="7">
    <location>
        <position position="244"/>
    </location>
</feature>
<feature type="modified residue" description="Asymmetric dimethylarginine" evidence="7">
    <location>
        <position position="248"/>
    </location>
</feature>
<feature type="modified residue" description="Asymmetric dimethylarginine" evidence="7">
    <location>
        <position position="251"/>
    </location>
</feature>
<feature type="modified residue" description="Asymmetric dimethylarginine" evidence="7">
    <location>
        <position position="259"/>
    </location>
</feature>
<feature type="modified residue" description="Phosphoserine" evidence="32">
    <location>
        <position position="277"/>
    </location>
</feature>
<feature type="modified residue" description="Phosphothreonine" evidence="32">
    <location>
        <position position="286"/>
    </location>
</feature>
<feature type="modified residue" description="Phosphoserine" evidence="34">
    <location>
        <position position="340"/>
    </location>
</feature>
<feature type="modified residue" description="Asymmetric dimethylarginine" evidence="7">
    <location>
        <position position="377"/>
    </location>
</feature>
<feature type="modified residue" description="Asymmetric dimethylarginine" evidence="7">
    <location>
        <position position="383"/>
    </location>
</feature>
<feature type="modified residue" description="Asymmetric dimethylarginine" evidence="7">
    <location>
        <position position="386"/>
    </location>
</feature>
<feature type="modified residue" description="Asymmetric dimethylarginine" evidence="7">
    <location>
        <position position="388"/>
    </location>
</feature>
<feature type="modified residue" description="Asymmetric dimethylarginine" evidence="7">
    <location>
        <position position="394"/>
    </location>
</feature>
<feature type="modified residue" description="Asymmetric dimethylarginine; alternate" evidence="7">
    <location>
        <position position="407"/>
    </location>
</feature>
<feature type="modified residue" description="Omega-N-methylarginine; alternate" evidence="1">
    <location>
        <position position="407"/>
    </location>
</feature>
<feature type="modified residue" description="Asymmetric dimethylarginine" evidence="7">
    <location>
        <position position="473"/>
    </location>
</feature>
<feature type="modified residue" description="Asymmetric dimethylarginine" evidence="7">
    <location>
        <position position="476"/>
    </location>
</feature>
<feature type="modified residue" description="Asymmetric dimethylarginine" evidence="7">
    <location>
        <position position="481"/>
    </location>
</feature>
<feature type="modified residue" description="Asymmetric dimethylarginine" evidence="7">
    <location>
        <position position="485"/>
    </location>
</feature>
<feature type="modified residue" description="Asymmetric dimethylarginine" evidence="7">
    <location>
        <position position="487"/>
    </location>
</feature>
<feature type="modified residue" description="Asymmetric dimethylarginine" evidence="7">
    <location>
        <position position="491"/>
    </location>
</feature>
<feature type="modified residue" description="Asymmetric dimethylarginine" evidence="7">
    <location>
        <position position="495"/>
    </location>
</feature>
<feature type="modified residue" description="Asymmetric dimethylarginine" evidence="7">
    <location>
        <position position="498"/>
    </location>
</feature>
<feature type="modified residue" description="Asymmetric dimethylarginine; alternate" evidence="7">
    <location>
        <position position="503"/>
    </location>
</feature>
<feature type="modified residue" description="Omega-N-methylarginine; alternate" evidence="35">
    <location>
        <position position="503"/>
    </location>
</feature>
<feature type="cross-link" description="Glycyl lysine isopeptide (Lys-Gly) (interchain with G-Cter in SUMO2)" evidence="36">
    <location>
        <position position="334"/>
    </location>
</feature>
<feature type="splice variant" id="VSP_005798" description="In isoform Short." evidence="30">
    <original>TG</original>
    <variation>S</variation>
    <location>
        <begin position="64"/>
        <end position="65"/>
    </location>
</feature>
<feature type="sequence variant" id="VAR_068918" description="In ALS6; dbSNP:rs148758737." evidence="14">
    <original>G</original>
    <variation>S</variation>
    <location>
        <position position="191"/>
    </location>
</feature>
<feature type="sequence variant" id="VAR_068919" description="In ALS6 and ETM4; dbSNP:rs267606832." evidence="14 17">
    <original>R</original>
    <variation>C</variation>
    <location>
        <position position="216"/>
    </location>
</feature>
<feature type="sequence variant" id="VAR_068920" description="In ALS6; dbSNP:rs1567472455." evidence="14">
    <original>G</original>
    <variation>V</variation>
    <location>
        <position position="225"/>
    </location>
</feature>
<feature type="sequence variant" id="VAR_068921" description="In ALS6; dbSNP:rs748374535." evidence="14">
    <original>G</original>
    <variation>C</variation>
    <location>
        <position position="230"/>
    </location>
</feature>
<feature type="sequence variant" id="VAR_068922" description="In ALS6; dbSNP:rs777819849." evidence="14">
    <original>R</original>
    <variation>C</variation>
    <location>
        <position position="234"/>
    </location>
</feature>
<feature type="sequence variant" id="VAR_054837" description="In ALS6; dbSNP:rs1165095258." evidence="12">
    <original>R</original>
    <variation>C</variation>
    <location>
        <position position="244"/>
    </location>
</feature>
<feature type="sequence variant" id="VAR_065229" description="Found in a patient with frontotemporal lobar degeneration; dbSNP:rs752076094." evidence="15">
    <original>M</original>
    <variation>V</variation>
    <location>
        <position position="254"/>
    </location>
</feature>
<feature type="sequence variant" id="VAR_035481" description="In a breast cancer sample; somatic mutation." evidence="8">
    <original>K</original>
    <variation>Q</variation>
    <location>
        <position position="312"/>
    </location>
</feature>
<feature type="sequence variant" id="VAR_068923" description="In ETM4; dbSNP:rs186547381." evidence="17">
    <original>P</original>
    <variation>L</variation>
    <location>
        <position position="431"/>
    </location>
</feature>
<feature type="sequence variant" id="VAR_068924" description="In ALS6; dbSNP:rs267606831." evidence="14">
    <original>G</original>
    <variation>D</variation>
    <location>
        <position position="507"/>
    </location>
</feature>
<feature type="sequence variant" id="VAR_054838" description="In ALS6; dbSNP:rs1555509609." evidence="13">
    <original>R</original>
    <variation>G</variation>
    <location>
        <position position="514"/>
    </location>
</feature>
<feature type="sequence variant" id="VAR_054839" description="In ALS6; dbSNP:rs1555509681." evidence="12">
    <original>R</original>
    <variation>S</variation>
    <location>
        <position position="514"/>
    </location>
</feature>
<feature type="sequence variant" id="VAR_054840" description="In ALS6; dbSNP:rs369757630." evidence="12">
    <original>G</original>
    <variation>C</variation>
    <location>
        <position position="515"/>
    </location>
</feature>
<feature type="sequence variant" id="VAR_054841" description="Does not affect protein nuclear localization; dbSNP:rs121909667." evidence="12">
    <original>H</original>
    <variation>Q</variation>
    <location>
        <position position="517"/>
    </location>
</feature>
<feature type="sequence variant" id="VAR_054842" description="In ALS6; dbSNP:rs121909669." evidence="12">
    <original>R</original>
    <variation>K</variation>
    <location>
        <position position="518"/>
    </location>
</feature>
<feature type="sequence variant" id="VAR_054843" description="In ALS6; results in aberrant trafficking and cytoplasmic retention of the protein; dbSNP:rs121909668." evidence="12 13 14">
    <original>R</original>
    <variation>C</variation>
    <location>
        <position position="521"/>
    </location>
</feature>
<feature type="sequence variant" id="VAR_054844" description="In ALS6; results in aberrant trafficking and cytoplasmic retention of the protein; dbSNP:rs121909668." evidence="12">
    <original>R</original>
    <variation>G</variation>
    <location>
        <position position="521"/>
    </location>
</feature>
<feature type="sequence variant" id="VAR_054845" description="In ALS6; results in aberrant trafficking and cytoplasmic retention of the protein; dbSNP:rs121909671." evidence="12 13 15 21">
    <original>R</original>
    <variation>H</variation>
    <location>
        <position position="521"/>
    </location>
</feature>
<feature type="sequence variant" id="VAR_054846" description="In ALS6; dbSNP:rs1555509693." evidence="12">
    <original>R</original>
    <variation>G</variation>
    <location>
        <position position="522"/>
    </location>
</feature>
<feature type="sequence variant" id="VAR_054847" description="In ALS6; dbSNP:rs886041389." evidence="12">
    <original>R</original>
    <variation>S</variation>
    <location>
        <position position="524"/>
    </location>
</feature>
<feature type="sequence variant" id="VAR_054848" description="In ALS6; dbSNP:rs544088874." evidence="12">
    <original>R</original>
    <variation>T</variation>
    <location>
        <position position="524"/>
    </location>
</feature>
<feature type="sequence variant" id="VAR_054849" description="In ALS6; dbSNP:rs886041390." evidence="12">
    <original>P</original>
    <variation>L</variation>
    <location>
        <position position="525"/>
    </location>
</feature>
<feature type="sequence variant" id="VAR_077328" description="In ALS6; uncertain significance." evidence="21">
    <original>Y</original>
    <variation>YY</variation>
    <location>
        <position position="526"/>
    </location>
</feature>
<feature type="sequence conflict" description="In Ref. 7; AA sequence." evidence="31" ref="7">
    <original>T</original>
    <variation>N</variation>
    <location>
        <position position="338"/>
    </location>
</feature>
<feature type="turn" evidence="45">
    <location>
        <begin position="40"/>
        <end position="43"/>
    </location>
</feature>
<feature type="strand" evidence="40">
    <location>
        <begin position="47"/>
        <end position="49"/>
    </location>
</feature>
<feature type="strand" evidence="45">
    <location>
        <begin position="55"/>
        <end position="58"/>
    </location>
</feature>
<feature type="strand" evidence="40">
    <location>
        <begin position="59"/>
        <end position="64"/>
    </location>
</feature>
<feature type="strand" evidence="45">
    <location>
        <begin position="68"/>
        <end position="70"/>
    </location>
</feature>
<feature type="strand" evidence="40">
    <location>
        <begin position="73"/>
        <end position="75"/>
    </location>
</feature>
<feature type="strand" evidence="45">
    <location>
        <begin position="93"/>
        <end position="96"/>
    </location>
</feature>
<feature type="turn" evidence="45">
    <location>
        <begin position="98"/>
        <end position="101"/>
    </location>
</feature>
<feature type="strand" evidence="44">
    <location>
        <begin position="113"/>
        <end position="124"/>
    </location>
</feature>
<feature type="strand" evidence="44">
    <location>
        <begin position="129"/>
        <end position="132"/>
    </location>
</feature>
<feature type="strand" evidence="44">
    <location>
        <begin position="139"/>
        <end position="149"/>
    </location>
</feature>
<feature type="helix" evidence="43">
    <location>
        <begin position="267"/>
        <end position="269"/>
    </location>
</feature>
<feature type="strand" evidence="43">
    <location>
        <begin position="270"/>
        <end position="272"/>
    </location>
</feature>
<feature type="helix" evidence="43">
    <location>
        <begin position="273"/>
        <end position="275"/>
    </location>
</feature>
<feature type="strand" evidence="37">
    <location>
        <begin position="285"/>
        <end position="290"/>
    </location>
</feature>
<feature type="helix" evidence="37">
    <location>
        <begin position="298"/>
        <end position="305"/>
    </location>
</feature>
<feature type="turn" evidence="37">
    <location>
        <begin position="306"/>
        <end position="308"/>
    </location>
</feature>
<feature type="turn" evidence="37">
    <location>
        <begin position="315"/>
        <end position="318"/>
    </location>
</feature>
<feature type="strand" evidence="37">
    <location>
        <begin position="319"/>
        <end position="326"/>
    </location>
</feature>
<feature type="turn" evidence="37">
    <location>
        <begin position="328"/>
        <end position="330"/>
    </location>
</feature>
<feature type="strand" evidence="37">
    <location>
        <begin position="332"/>
        <end position="343"/>
    </location>
</feature>
<feature type="helix" evidence="37">
    <location>
        <begin position="344"/>
        <end position="354"/>
    </location>
</feature>
<feature type="strand" evidence="37">
    <location>
        <begin position="358"/>
        <end position="363"/>
    </location>
</feature>
<feature type="strand" evidence="37">
    <location>
        <begin position="365"/>
        <end position="368"/>
    </location>
</feature>
<feature type="helix" evidence="42">
    <location>
        <begin position="372"/>
        <end position="375"/>
    </location>
</feature>
<feature type="strand" evidence="38">
    <location>
        <begin position="379"/>
        <end position="381"/>
    </location>
</feature>
<feature type="turn" evidence="41">
    <location>
        <begin position="431"/>
        <end position="433"/>
    </location>
</feature>
<feature type="turn" evidence="41">
    <location>
        <begin position="445"/>
        <end position="447"/>
    </location>
</feature>
<feature type="strand" evidence="41">
    <location>
        <begin position="450"/>
        <end position="452"/>
    </location>
</feature>
<feature type="helix" evidence="39">
    <location>
        <begin position="514"/>
        <end position="521"/>
    </location>
</feature>
<comment type="function">
    <text evidence="1 5 16 18 20 23">DNA/RNA-binding protein that plays a role in various cellular processes such as transcription regulation, RNA splicing, RNA transport, DNA repair and damage response (PubMed:27731383). Binds to ssRNA containing the consensus sequence 5'-AGGUAA-3' (PubMed:21256132). Binds to nascent pre-mRNAs and acts as a molecular mediator between RNA polymerase II and U1 small nuclear ribonucleoprotein thereby coupling transcription and splicing (PubMed:26124092). Also binds its own pre-mRNA and autoregulates its expression; this autoregulation mechanism is mediated by non-sense-mediated decay (PubMed:24204307). Plays a role in DNA repair mechanisms by promoting D-loop formation and homologous recombination during DNA double-strand break repair (PubMed:10567410). In neuronal cells, plays crucial roles in dendritic spine formation and stability, RNA transport, mRNA stability and synaptic homeostasis (By similarity).</text>
</comment>
<comment type="subunit">
    <text evidence="9 11 19 20 22 23 25 28 29">Self-oligomerizes (via N-terminal region) (PubMed:25453086). Oligomerization is essential for chromatin binding (PubMed:25453086). Component of nuclear riboprotein complexes. Interacts with ILF3, TDRD3 and SF1 (PubMed:9660765). Interacts through its C-terminus with SFRS13A (PubMed:9774382). Interacts with OTUB1 and SARNP. Interacts with LRSAM1 (PubMed:27615052). Interacts with SAFB1 in a DNA-dependent manner; this interaction tethers FUS to chromatin (PubMed:27731383). Interacts with MATR3 (PubMed:27731383). Interacts with SNRNP70 and POLR2A; these interactions couple RNA transcription and splicing (PubMed:26124092). Interacts (through its RNA-binding domain) with RALY (through its RNA-binding domain); both are components of the same RNPs (PubMed:30354839).</text>
</comment>
<comment type="interaction">
    <interactant intactId="EBI-400434">
        <id>P35637</id>
    </interactant>
    <interactant intactId="EBI-10988864">
        <id>P46379-2</id>
        <label>BAG6</label>
    </interactant>
    <organismsDiffer>false</organismsDiffer>
    <experiments>3</experiments>
</comment>
<comment type="interaction">
    <interactant intactId="EBI-400434">
        <id>P35637</id>
    </interactant>
    <interactant intactId="EBI-702336">
        <id>O75815</id>
        <label>BCAR3</label>
    </interactant>
    <organismsDiffer>false</organismsDiffer>
    <experiments>3</experiments>
</comment>
<comment type="interaction">
    <interactant intactId="EBI-400434">
        <id>P35637</id>
    </interactant>
    <interactant intactId="EBI-744027">
        <id>Q13191</id>
        <label>CBLB</label>
    </interactant>
    <organismsDiffer>false</organismsDiffer>
    <experiments>3</experiments>
</comment>
<comment type="interaction">
    <interactant intactId="EBI-400434">
        <id>P35637</id>
    </interactant>
    <interactant intactId="EBI-9087876">
        <id>P48730-2</id>
        <label>CSNK1D</label>
    </interactant>
    <organismsDiffer>false</organismsDiffer>
    <experiments>3</experiments>
</comment>
<comment type="interaction">
    <interactant intactId="EBI-400434">
        <id>P35637</id>
    </interactant>
    <interactant intactId="EBI-528367">
        <id>Q9NRR4</id>
        <label>DROSHA</label>
    </interactant>
    <organismsDiffer>false</organismsDiffer>
    <experiments>2</experiments>
</comment>
<comment type="interaction">
    <interactant intactId="EBI-400434">
        <id>P35637</id>
    </interactant>
    <interactant intactId="EBI-1043343">
        <id>O60739</id>
        <label>EIF1B</label>
    </interactant>
    <organismsDiffer>false</organismsDiffer>
    <experiments>3</experiments>
</comment>
<comment type="interaction">
    <interactant intactId="EBI-400434">
        <id>P35637</id>
    </interactant>
    <interactant intactId="EBI-447295">
        <id>Q09472</id>
        <label>EP300</label>
    </interactant>
    <organismsDiffer>false</organismsDiffer>
    <experiments>4</experiments>
</comment>
<comment type="interaction">
    <interactant intactId="EBI-400434">
        <id>P35637</id>
    </interactant>
    <interactant intactId="EBI-739737">
        <id>Q01844</id>
        <label>EWSR1</label>
    </interactant>
    <organismsDiffer>false</organismsDiffer>
    <experiments>5</experiments>
</comment>
<comment type="interaction">
    <interactant intactId="EBI-400434">
        <id>P35637</id>
    </interactant>
    <interactant intactId="EBI-400434">
        <id>P35637</id>
        <label>FUS</label>
    </interactant>
    <organismsDiffer>false</organismsDiffer>
    <experiments>9</experiments>
</comment>
<comment type="interaction">
    <interactant intactId="EBI-400434">
        <id>P35637</id>
    </interactant>
    <interactant intactId="EBI-998542">
        <id>Q05586</id>
        <label>GRIN1</label>
    </interactant>
    <organismsDiffer>false</organismsDiffer>
    <experiments>3</experiments>
</comment>
<comment type="interaction">
    <interactant intactId="EBI-400434">
        <id>P35637</id>
    </interactant>
    <interactant intactId="EBI-15870655">
        <id>P49841-2</id>
        <label>GSK3B</label>
    </interactant>
    <organismsDiffer>false</organismsDiffer>
    <experiments>3</experiments>
</comment>
<comment type="interaction">
    <interactant intactId="EBI-400434">
        <id>P35637</id>
    </interactant>
    <interactant intactId="EBI-399080">
        <id>Q92993</id>
        <label>KAT5</label>
    </interactant>
    <organismsDiffer>false</organismsDiffer>
    <experiments>2</experiments>
</comment>
<comment type="interaction">
    <interactant intactId="EBI-400434">
        <id>P35637</id>
    </interactant>
    <interactant intactId="EBI-1057615">
        <id>O15479</id>
        <label>MAGEB2</label>
    </interactant>
    <organismsDiffer>false</organismsDiffer>
    <experiments>3</experiments>
</comment>
<comment type="interaction">
    <interactant intactId="EBI-400434">
        <id>P35637</id>
    </interactant>
    <interactant intactId="EBI-1058491">
        <id>Q96FW1</id>
        <label>OTUB1</label>
    </interactant>
    <organismsDiffer>false</organismsDiffer>
    <experiments>3</experiments>
</comment>
<comment type="interaction">
    <interactant intactId="EBI-400434">
        <id>P35637</id>
    </interactant>
    <interactant intactId="EBI-10302990">
        <id>Q9BYU1</id>
        <label>PBX4</label>
    </interactant>
    <organismsDiffer>false</organismsDiffer>
    <experiments>3</experiments>
</comment>
<comment type="interaction">
    <interactant intactId="EBI-400434">
        <id>P35637</id>
    </interactant>
    <interactant intactId="EBI-297903">
        <id>Q15149</id>
        <label>PLEC</label>
    </interactant>
    <organismsDiffer>false</organismsDiffer>
    <experiments>4</experiments>
</comment>
<comment type="interaction">
    <interactant intactId="EBI-400434">
        <id>P35637</id>
    </interactant>
    <interactant intactId="EBI-78738">
        <id>Q99873</id>
        <label>PRMT1</label>
    </interactant>
    <organismsDiffer>false</organismsDiffer>
    <experiments>5</experiments>
</comment>
<comment type="interaction">
    <interactant intactId="EBI-400434">
        <id>P35637</id>
    </interactant>
    <interactant intactId="EBI-17165527">
        <id>Q99873-3</id>
        <label>PRMT1</label>
    </interactant>
    <organismsDiffer>false</organismsDiffer>
    <experiments>3</experiments>
</comment>
<comment type="interaction">
    <interactant intactId="EBI-400434">
        <id>P35637</id>
    </interactant>
    <interactant intactId="EBI-12255608">
        <id>Q9UKA9-2</id>
        <label>PTBP2</label>
    </interactant>
    <organismsDiffer>false</organismsDiffer>
    <experiments>3</experiments>
</comment>
<comment type="interaction">
    <interactant intactId="EBI-400434">
        <id>P35637</id>
    </interactant>
    <interactant intactId="EBI-714796">
        <id>Q9UKM9</id>
        <label>RALY</label>
    </interactant>
    <organismsDiffer>false</organismsDiffer>
    <experiments>6</experiments>
</comment>
<comment type="interaction">
    <interactant intactId="EBI-400434">
        <id>P35637</id>
    </interactant>
    <interactant intactId="EBI-743526">
        <id>P38159</id>
        <label>RBMX</label>
    </interactant>
    <organismsDiffer>false</organismsDiffer>
    <experiments>7</experiments>
</comment>
<comment type="interaction">
    <interactant intactId="EBI-400434">
        <id>P35637</id>
    </interactant>
    <interactant intactId="EBI-10223388">
        <id>Q04206-3</id>
        <label>RELA</label>
    </interactant>
    <organismsDiffer>false</organismsDiffer>
    <experiments>3</experiments>
</comment>
<comment type="interaction">
    <interactant intactId="EBI-400434">
        <id>P35637</id>
    </interactant>
    <interactant intactId="EBI-366570">
        <id>Q9BUL9</id>
        <label>RPP25</label>
    </interactant>
    <organismsDiffer>false</organismsDiffer>
    <experiments>3</experiments>
</comment>
<comment type="interaction">
    <interactant intactId="EBI-400434">
        <id>P35637</id>
    </interactant>
    <interactant intactId="EBI-78598">
        <id>P19793</id>
        <label>RXRA</label>
    </interactant>
    <organismsDiffer>false</organismsDiffer>
    <experiments>3</experiments>
</comment>
<comment type="interaction">
    <interactant intactId="EBI-400434">
        <id>P35637</id>
    </interactant>
    <interactant intactId="EBI-752324">
        <id>Q8N488</id>
        <label>RYBP</label>
    </interactant>
    <organismsDiffer>false</organismsDiffer>
    <experiments>4</experiments>
</comment>
<comment type="interaction">
    <interactant intactId="EBI-400434">
        <id>P35637</id>
    </interactant>
    <interactant intactId="EBI-348298">
        <id>Q15424</id>
        <label>SAFB</label>
    </interactant>
    <organismsDiffer>false</organismsDiffer>
    <experiments>8</experiments>
</comment>
<comment type="interaction">
    <interactant intactId="EBI-400434">
        <id>P35637</id>
    </interactant>
    <interactant intactId="EBI-79819">
        <id>P60896</id>
        <label>SEM1</label>
    </interactant>
    <organismsDiffer>false</organismsDiffer>
    <experiments>3</experiments>
</comment>
<comment type="interaction">
    <interactant intactId="EBI-400434">
        <id>P35637</id>
    </interactant>
    <interactant intactId="EBI-395421">
        <id>Q16637</id>
        <label>SMN2</label>
    </interactant>
    <organismsDiffer>false</organismsDiffer>
    <experiments>2</experiments>
</comment>
<comment type="interaction">
    <interactant intactId="EBI-400434">
        <id>P35637</id>
    </interactant>
    <interactant intactId="EBI-7067260">
        <id>Q8NHS9</id>
        <label>SPATA22</label>
    </interactant>
    <organismsDiffer>false</organismsDiffer>
    <experiments>3</experiments>
</comment>
<comment type="interaction">
    <interactant intactId="EBI-400434">
        <id>P35637</id>
    </interactant>
    <interactant intactId="EBI-2255091">
        <id>Q92804</id>
        <label>TAF15</label>
    </interactant>
    <organismsDiffer>false</organismsDiffer>
    <experiments>8</experiments>
</comment>
<comment type="interaction">
    <interactant intactId="EBI-400434">
        <id>P35637</id>
    </interactant>
    <interactant intactId="EBI-372899">
        <id>Q13148</id>
        <label>TARDBP</label>
    </interactant>
    <organismsDiffer>false</organismsDiffer>
    <experiments>9</experiments>
</comment>
<comment type="interaction">
    <interactant intactId="EBI-400434">
        <id>P35637</id>
    </interactant>
    <interactant intactId="EBI-11022821">
        <id>Q92973-2</id>
        <label>TNPO1</label>
    </interactant>
    <organismsDiffer>false</organismsDiffer>
    <experiments>2</experiments>
</comment>
<comment type="interaction">
    <interactant intactId="EBI-400434">
        <id>P35637</id>
    </interactant>
    <interactant intactId="EBI-2337775">
        <id>Q9H3D4</id>
        <label>TP63</label>
    </interactant>
    <organismsDiffer>false</organismsDiffer>
    <experiments>2</experiments>
</comment>
<comment type="interaction">
    <interactant intactId="EBI-400434">
        <id>P35637</id>
    </interactant>
    <interactant intactId="EBI-11027067">
        <id>P18206-2</id>
        <label>VCL</label>
    </interactant>
    <organismsDiffer>false</organismsDiffer>
    <experiments>3</experiments>
</comment>
<comment type="interaction">
    <interactant intactId="EBI-400434">
        <id>P35637</id>
    </interactant>
    <interactant intactId="EBI-296306">
        <id>P45481</id>
        <label>Crebbp</label>
    </interactant>
    <organismsDiffer>true</organismsDiffer>
    <experiments>4</experiments>
</comment>
<comment type="interaction">
    <interactant intactId="EBI-400434">
        <id>P35637</id>
    </interactant>
    <interactant intactId="EBI-309807">
        <id>P97801</id>
        <label>Smn1</label>
    </interactant>
    <organismsDiffer>true</organismsDiffer>
    <experiments>5</experiments>
</comment>
<comment type="subcellular location">
    <subcellularLocation>
        <location evidence="12 13 18 19 25">Nucleus</location>
    </subcellularLocation>
    <text evidence="19">Displays a punctate pattern inside the nucleus and is excluded from nucleoli.</text>
</comment>
<comment type="alternative products">
    <event type="alternative splicing"/>
    <isoform>
        <id>P35637-1</id>
        <name>Long</name>
        <sequence type="displayed"/>
    </isoform>
    <isoform>
        <id>P35637-2</id>
        <name>Short</name>
        <sequence type="described" ref="VSP_005798"/>
    </isoform>
</comment>
<comment type="tissue specificity">
    <text>Ubiquitous.</text>
</comment>
<comment type="PTM">
    <text>Arg-216 and Arg-218 are dimethylated, probably to asymmetric dimethylarginine.</text>
</comment>
<comment type="PTM">
    <text evidence="10 24">Phosphorylated in its N-terminal serine residues upon induced DNA damage. ATM and DNA-PK are able to phosphorylate FUS N-terminal region.</text>
</comment>
<comment type="disease">
    <text evidence="26">A chromosomal aberration involving FUS is found in a patient with malignant myxoid liposarcoma. Translocation t(12;16)(q13;p11) with DDIT3.</text>
</comment>
<comment type="disease">
    <text evidence="27">A chromosomal aberration involving FUS is a cause of acute myeloid leukemia (AML). Translocation t(16;21)(p11;q22) with ERG.</text>
</comment>
<comment type="disease" evidence="6">
    <disease id="DI-02611">
        <name>Angiomatoid fibrous histiocytoma</name>
        <acronym>AFH</acronym>
        <description>A distinct variant of malignant fibrous histiocytoma that typically occurs in children and adolescents and is manifest by nodular subcutaneous growth. Characteristic microscopic features include lobulated sheets of histiocyte-like cells intimately associated with areas of hemorrhage and cystic pseudovascular spaces, as well as a striking cuffing of inflammatory cells, mimicking a lymph node metastasis.</description>
        <dbReference type="MIM" id="612160"/>
    </disease>
    <text evidence="6">The gene represented in this entry is involved in disease pathogenesis. A chromosomal aberration involving FUS is found in a patient with angiomatoid fibrous histiocytoma. Translocation t(12;16)(q13;p11.2) with ATF1 generates a chimeric FUS/ATF1 protein.</text>
</comment>
<comment type="disease" evidence="12 13 14 15 21">
    <disease id="DI-00111">
        <name>Amyotrophic lateral sclerosis 6, with or without frontotemporal dementia</name>
        <acronym>ALS6</acronym>
        <description>A neurodegenerative disorder affecting upper motor neurons in the brain and lower motor neurons in the brain stem and spinal cord, resulting in fatal paralysis. Sensory abnormalities are absent. The pathologic hallmarks of the disease include pallor of the corticospinal tract due to loss of motor neurons, presence of ubiquitin-positive inclusions within surviving motor neurons, and deposition of pathologic aggregates. The etiology of amyotrophic lateral sclerosis is likely to be multifactorial, involving both genetic and environmental factors. The disease is inherited in 5-10% of the cases.</description>
        <dbReference type="MIM" id="608030"/>
    </disease>
    <text>The disease is caused by variants affecting the gene represented in this entry.</text>
</comment>
<comment type="disease" evidence="17">
    <disease id="DI-03518">
        <name>Tremor, hereditary essential 4</name>
        <acronym>ETM4</acronym>
        <description>A common movement disorder mainly characterized by postural tremor of the arms. Head, legs, trunk, voice, jaw, and facial muscles may also be involved. The condition can be aggravated by emotions, hunger, fatigue and temperature extremes, and may cause a functional disability or even incapacitation. Inheritance is autosomal dominant.</description>
        <dbReference type="MIM" id="614782"/>
    </disease>
    <text>The disease is caused by variants affecting the gene represented in this entry.</text>
</comment>
<comment type="similarity">
    <text evidence="31">Belongs to the RRM TET family.</text>
</comment>
<comment type="online information" name="Atlas of Genetics and Cytogenetics in Oncology and Haematology">
    <link uri="https://atlasgeneticsoncology.org/gene/44/FUS"/>
</comment>
<dbReference type="EMBL" id="S62140">
    <property type="protein sequence ID" value="AAB27102.1"/>
    <property type="molecule type" value="mRNA"/>
</dbReference>
<dbReference type="EMBL" id="S62138">
    <property type="protein sequence ID" value="AAB27103.1"/>
    <property type="status" value="ALT_SEQ"/>
    <property type="molecule type" value="mRNA"/>
</dbReference>
<dbReference type="EMBL" id="X71427">
    <property type="protein sequence ID" value="CAA50558.1"/>
    <property type="status" value="ALT_SEQ"/>
    <property type="molecule type" value="mRNA"/>
</dbReference>
<dbReference type="EMBL" id="X71428">
    <property type="protein sequence ID" value="CAA50559.1"/>
    <property type="status" value="ALT_SEQ"/>
    <property type="molecule type" value="mRNA"/>
</dbReference>
<dbReference type="EMBL" id="AF071213">
    <property type="protein sequence ID" value="AAC35285.1"/>
    <property type="molecule type" value="Genomic_DNA"/>
</dbReference>
<dbReference type="EMBL" id="AF071213">
    <property type="protein sequence ID" value="AAC35284.1"/>
    <property type="molecule type" value="Genomic_DNA"/>
</dbReference>
<dbReference type="EMBL" id="AC009088">
    <property type="status" value="NOT_ANNOTATED_CDS"/>
    <property type="molecule type" value="Genomic_DNA"/>
</dbReference>
<dbReference type="EMBL" id="BC000402">
    <property type="protein sequence ID" value="AAH00402.1"/>
    <property type="molecule type" value="mRNA"/>
</dbReference>
<dbReference type="EMBL" id="BC002459">
    <property type="protein sequence ID" value="AAH02459.1"/>
    <property type="molecule type" value="mRNA"/>
</dbReference>
<dbReference type="EMBL" id="AJ295163">
    <property type="protein sequence ID" value="CAC15058.1"/>
    <property type="status" value="ALT_TERM"/>
    <property type="molecule type" value="mRNA"/>
</dbReference>
<dbReference type="CCDS" id="CCDS10707.1">
    <molecule id="P35637-1"/>
</dbReference>
<dbReference type="CCDS" id="CCDS58454.1">
    <molecule id="P35637-2"/>
</dbReference>
<dbReference type="PIR" id="S33798">
    <property type="entry name" value="S33798"/>
</dbReference>
<dbReference type="PIR" id="S33799">
    <property type="entry name" value="S33799"/>
</dbReference>
<dbReference type="RefSeq" id="NP_001164105.1">
    <molecule id="P35637-2"/>
    <property type="nucleotide sequence ID" value="NM_001170634.1"/>
</dbReference>
<dbReference type="RefSeq" id="NP_004951.1">
    <molecule id="P35637-1"/>
    <property type="nucleotide sequence ID" value="NM_004960.4"/>
</dbReference>
<dbReference type="PDB" id="2LA6">
    <property type="method" value="NMR"/>
    <property type="chains" value="A=282-370"/>
</dbReference>
<dbReference type="PDB" id="2LCW">
    <property type="method" value="NMR"/>
    <property type="chains" value="A=278-385"/>
</dbReference>
<dbReference type="PDB" id="4FDD">
    <property type="method" value="X-ray"/>
    <property type="resolution" value="2.30 A"/>
    <property type="chains" value="B=498-526"/>
</dbReference>
<dbReference type="PDB" id="4FQ3">
    <property type="method" value="X-ray"/>
    <property type="resolution" value="3.00 A"/>
    <property type="chains" value="B=495-526"/>
</dbReference>
<dbReference type="PDB" id="5W3N">
    <property type="method" value="NMR"/>
    <property type="chains" value="A/B/C/D/E/F/G/H/I=2-214"/>
</dbReference>
<dbReference type="PDB" id="5XRR">
    <property type="method" value="X-ray"/>
    <property type="resolution" value="1.50 A"/>
    <property type="chains" value="A=54-59"/>
</dbReference>
<dbReference type="PDB" id="5XSG">
    <property type="method" value="EM"/>
    <property type="resolution" value="0.73 A"/>
    <property type="chains" value="A=37-42"/>
</dbReference>
<dbReference type="PDB" id="5YVG">
    <property type="method" value="X-ray"/>
    <property type="resolution" value="4.05 A"/>
    <property type="chains" value="X/Y=1-526"/>
</dbReference>
<dbReference type="PDB" id="5YVH">
    <property type="method" value="X-ray"/>
    <property type="resolution" value="3.15 A"/>
    <property type="chains" value="B=371-526"/>
</dbReference>
<dbReference type="PDB" id="5YVI">
    <property type="method" value="X-ray"/>
    <property type="resolution" value="2.90 A"/>
    <property type="chains" value="B=456-526"/>
</dbReference>
<dbReference type="PDB" id="6BWZ">
    <property type="method" value="X-ray"/>
    <property type="resolution" value="1.10 A"/>
    <property type="chains" value="A=37-42"/>
</dbReference>
<dbReference type="PDB" id="6BXV">
    <property type="method" value="X-ray"/>
    <property type="resolution" value="1.10 A"/>
    <property type="chains" value="A=54-61"/>
</dbReference>
<dbReference type="PDB" id="6BZP">
    <property type="method" value="EM"/>
    <property type="resolution" value="1.10 A"/>
    <property type="chains" value="A/B=77-82"/>
</dbReference>
<dbReference type="PDB" id="6G99">
    <property type="method" value="NMR"/>
    <property type="chains" value="B=419-454"/>
</dbReference>
<dbReference type="PDB" id="6GBM">
    <property type="method" value="NMR"/>
    <property type="chains" value="B=280-377"/>
</dbReference>
<dbReference type="PDB" id="6KJ1">
    <property type="method" value="EM"/>
    <property type="resolution" value="0.65 A"/>
    <property type="chains" value="A=37-42"/>
</dbReference>
<dbReference type="PDB" id="6KJ2">
    <property type="method" value="EM"/>
    <property type="resolution" value="0.67 A"/>
    <property type="chains" value="A=37-42"/>
</dbReference>
<dbReference type="PDB" id="6KJ3">
    <property type="method" value="EM"/>
    <property type="resolution" value="0.60 A"/>
    <property type="chains" value="A=37-42"/>
</dbReference>
<dbReference type="PDB" id="6KJ4">
    <property type="method" value="EM"/>
    <property type="resolution" value="0.65 A"/>
    <property type="chains" value="A=37-42"/>
</dbReference>
<dbReference type="PDB" id="6SNJ">
    <property type="method" value="NMR"/>
    <property type="chains" value="A=260-390"/>
</dbReference>
<dbReference type="PDB" id="6XFM">
    <property type="method" value="EM"/>
    <property type="resolution" value="2.62 A"/>
    <property type="chains" value="1/2/3/4/5/6/7/8=111-214"/>
</dbReference>
<dbReference type="PDB" id="7CYL">
    <property type="method" value="X-ray"/>
    <property type="resolution" value="2.70 A"/>
    <property type="chains" value="B=476-526"/>
</dbReference>
<dbReference type="PDB" id="7VQQ">
    <property type="method" value="EM"/>
    <property type="resolution" value="2.90 A"/>
    <property type="chains" value="A/B/C=2-214"/>
</dbReference>
<dbReference type="PDBsum" id="2LA6"/>
<dbReference type="PDBsum" id="2LCW"/>
<dbReference type="PDBsum" id="4FDD"/>
<dbReference type="PDBsum" id="4FQ3"/>
<dbReference type="PDBsum" id="5W3N"/>
<dbReference type="PDBsum" id="5XRR"/>
<dbReference type="PDBsum" id="5XSG"/>
<dbReference type="PDBsum" id="5YVG"/>
<dbReference type="PDBsum" id="5YVH"/>
<dbReference type="PDBsum" id="5YVI"/>
<dbReference type="PDBsum" id="6BWZ"/>
<dbReference type="PDBsum" id="6BXV"/>
<dbReference type="PDBsum" id="6BZP"/>
<dbReference type="PDBsum" id="6G99"/>
<dbReference type="PDBsum" id="6GBM"/>
<dbReference type="PDBsum" id="6KJ1"/>
<dbReference type="PDBsum" id="6KJ2"/>
<dbReference type="PDBsum" id="6KJ3"/>
<dbReference type="PDBsum" id="6KJ4"/>
<dbReference type="PDBsum" id="6SNJ"/>
<dbReference type="PDBsum" id="6XFM"/>
<dbReference type="PDBsum" id="7CYL"/>
<dbReference type="PDBsum" id="7VQQ"/>
<dbReference type="BMRB" id="P35637"/>
<dbReference type="EMDB" id="EMD-0696"/>
<dbReference type="EMDB" id="EMD-0697"/>
<dbReference type="EMDB" id="EMD-0698"/>
<dbReference type="EMDB" id="EMD-0699"/>
<dbReference type="EMDB" id="EMD-22169"/>
<dbReference type="EMDB" id="EMD-32092"/>
<dbReference type="SMR" id="P35637"/>
<dbReference type="BioGRID" id="108797">
    <property type="interactions" value="828"/>
</dbReference>
<dbReference type="CORUM" id="P35637"/>
<dbReference type="DIP" id="DIP-29857N"/>
<dbReference type="FunCoup" id="P35637">
    <property type="interactions" value="3093"/>
</dbReference>
<dbReference type="IntAct" id="P35637">
    <property type="interactions" value="435"/>
</dbReference>
<dbReference type="MINT" id="P35637"/>
<dbReference type="STRING" id="9606.ENSP00000254108"/>
<dbReference type="GlyCosmos" id="P35637">
    <property type="glycosylation" value="10 sites, 2 glycans"/>
</dbReference>
<dbReference type="GlyGen" id="P35637">
    <property type="glycosylation" value="13 sites, 1 N-linked glycan (1 site), 3 O-linked glycans (12 sites)"/>
</dbReference>
<dbReference type="iPTMnet" id="P35637"/>
<dbReference type="MetOSite" id="P35637"/>
<dbReference type="PhosphoSitePlus" id="P35637"/>
<dbReference type="SwissPalm" id="P35637"/>
<dbReference type="BioMuta" id="FUS"/>
<dbReference type="DMDM" id="544357"/>
<dbReference type="jPOST" id="P35637"/>
<dbReference type="MassIVE" id="P35637"/>
<dbReference type="PaxDb" id="9606-ENSP00000254108"/>
<dbReference type="PeptideAtlas" id="P35637"/>
<dbReference type="ProteomicsDB" id="55119">
    <molecule id="P35637-1"/>
</dbReference>
<dbReference type="ProteomicsDB" id="55120">
    <molecule id="P35637-2"/>
</dbReference>
<dbReference type="Pumba" id="P35637"/>
<dbReference type="TopDownProteomics" id="P35637-1">
    <molecule id="P35637-1"/>
</dbReference>
<dbReference type="TopDownProteomics" id="P35637-2">
    <molecule id="P35637-2"/>
</dbReference>
<dbReference type="ABCD" id="P35637">
    <property type="antibodies" value="1 sequenced antibody"/>
</dbReference>
<dbReference type="Antibodypedia" id="1307">
    <property type="antibodies" value="481 antibodies from 38 providers"/>
</dbReference>
<dbReference type="DNASU" id="2521"/>
<dbReference type="YCharOS" id="P35637">
    <property type="antibodies" value="Tested 10 antibodies from 5 manufacturers"/>
</dbReference>
<dbReference type="Ensembl" id="ENST00000254108.12">
    <molecule id="P35637-1"/>
    <property type="protein sequence ID" value="ENSP00000254108.8"/>
    <property type="gene ID" value="ENSG00000089280.20"/>
</dbReference>
<dbReference type="Ensembl" id="ENST00000380244.8">
    <molecule id="P35637-2"/>
    <property type="protein sequence ID" value="ENSP00000369594.3"/>
    <property type="gene ID" value="ENSG00000089280.20"/>
</dbReference>
<dbReference type="GeneID" id="2521"/>
<dbReference type="KEGG" id="hsa:2521"/>
<dbReference type="MANE-Select" id="ENST00000254108.12">
    <property type="protein sequence ID" value="ENSP00000254108.8"/>
    <property type="RefSeq nucleotide sequence ID" value="NM_004960.4"/>
    <property type="RefSeq protein sequence ID" value="NP_004951.1"/>
</dbReference>
<dbReference type="UCSC" id="uc002ebh.4">
    <molecule id="P35637-1"/>
    <property type="organism name" value="human"/>
</dbReference>
<dbReference type="AGR" id="HGNC:4010"/>
<dbReference type="CTD" id="2521"/>
<dbReference type="DisGeNET" id="2521"/>
<dbReference type="GeneCards" id="FUS"/>
<dbReference type="HGNC" id="HGNC:4010">
    <property type="gene designation" value="FUS"/>
</dbReference>
<dbReference type="HPA" id="ENSG00000089280">
    <property type="expression patterns" value="Low tissue specificity"/>
</dbReference>
<dbReference type="MalaCards" id="FUS"/>
<dbReference type="MIM" id="137070">
    <property type="type" value="gene"/>
</dbReference>
<dbReference type="MIM" id="608030">
    <property type="type" value="phenotype"/>
</dbReference>
<dbReference type="MIM" id="612160">
    <property type="type" value="phenotype"/>
</dbReference>
<dbReference type="MIM" id="614782">
    <property type="type" value="phenotype"/>
</dbReference>
<dbReference type="neXtProt" id="NX_P35637"/>
<dbReference type="OpenTargets" id="ENSG00000089280"/>
<dbReference type="Orphanet" id="803">
    <property type="disease" value="Amyotrophic lateral sclerosis"/>
</dbReference>
<dbReference type="Orphanet" id="275872">
    <property type="disease" value="Frontotemporal dementia with motor neuron disease"/>
</dbReference>
<dbReference type="Orphanet" id="300605">
    <property type="disease" value="Juvenile amyotrophic lateral sclerosis"/>
</dbReference>
<dbReference type="Orphanet" id="79105">
    <property type="disease" value="Myxofibrosarcoma"/>
</dbReference>
<dbReference type="Orphanet" id="99967">
    <property type="disease" value="Myxoid/round cell liposarcoma"/>
</dbReference>
<dbReference type="PharmGKB" id="PA28425"/>
<dbReference type="VEuPathDB" id="HostDB:ENSG00000089280"/>
<dbReference type="eggNOG" id="KOG1995">
    <property type="taxonomic scope" value="Eukaryota"/>
</dbReference>
<dbReference type="GeneTree" id="ENSGT00940000157290"/>
<dbReference type="InParanoid" id="P35637"/>
<dbReference type="OMA" id="SYSKGPM"/>
<dbReference type="OrthoDB" id="76445at2759"/>
<dbReference type="PAN-GO" id="P35637">
    <property type="GO annotations" value="3 GO annotations based on evolutionary models"/>
</dbReference>
<dbReference type="PhylomeDB" id="P35637"/>
<dbReference type="TreeFam" id="TF322599"/>
<dbReference type="PathwayCommons" id="P35637"/>
<dbReference type="Reactome" id="R-HSA-72163">
    <property type="pathway name" value="mRNA Splicing - Major Pathway"/>
</dbReference>
<dbReference type="Reactome" id="R-HSA-72203">
    <property type="pathway name" value="Processing of Capped Intron-Containing Pre-mRNA"/>
</dbReference>
<dbReference type="SignaLink" id="P35637"/>
<dbReference type="SIGNOR" id="P35637"/>
<dbReference type="BioGRID-ORCS" id="2521">
    <property type="hits" value="58 hits in 1174 CRISPR screens"/>
</dbReference>
<dbReference type="CD-CODE" id="01ADBBD5">
    <property type="entry name" value="Synthetic Condensate 000031"/>
</dbReference>
<dbReference type="CD-CODE" id="1422620B">
    <property type="entry name" value="Synthetic Condensate 000017"/>
</dbReference>
<dbReference type="CD-CODE" id="1A0651A8">
    <property type="entry name" value="Synthetic Condensate 000370"/>
</dbReference>
<dbReference type="CD-CODE" id="1A18FFC4">
    <property type="entry name" value="Paraspeckle"/>
</dbReference>
<dbReference type="CD-CODE" id="1CD3856C">
    <property type="entry name" value="Synthetic Condensate 000003"/>
</dbReference>
<dbReference type="CD-CODE" id="21A3CED6">
    <property type="entry name" value="Synthetic Condensate 000267"/>
</dbReference>
<dbReference type="CD-CODE" id="232F8A39">
    <property type="entry name" value="P-body"/>
</dbReference>
<dbReference type="CD-CODE" id="2857FDAA">
    <property type="entry name" value="Synthetic Condensate 000028"/>
</dbReference>
<dbReference type="CD-CODE" id="28F24DDF">
    <property type="entry name" value="Synthetic Condensate 000256"/>
</dbReference>
<dbReference type="CD-CODE" id="2C224C76">
    <property type="entry name" value="Synthetic Condensate 000284"/>
</dbReference>
<dbReference type="CD-CODE" id="2CE6B729">
    <property type="entry name" value="Synthetic Condensate 000295"/>
</dbReference>
<dbReference type="CD-CODE" id="2CF52CF0">
    <property type="entry name" value="Synthetic Condensate 000015"/>
</dbReference>
<dbReference type="CD-CODE" id="33BF1E0E">
    <property type="entry name" value="Synthetic Condensate 000053"/>
</dbReference>
<dbReference type="CD-CODE" id="3B1261D3">
    <property type="entry name" value="Synthetic Condensate 000365"/>
</dbReference>
<dbReference type="CD-CODE" id="44FCF654">
    <property type="entry name" value="Synthetic Condensate 000363"/>
</dbReference>
<dbReference type="CD-CODE" id="500EDC60">
    <property type="entry name" value="Synthetic Condensate 000260"/>
</dbReference>
<dbReference type="CD-CODE" id="58F5AC37">
    <property type="entry name" value="Synthetic Condensate 000283"/>
</dbReference>
<dbReference type="CD-CODE" id="60F74988">
    <property type="entry name" value="Synthetic Condensate 000004"/>
</dbReference>
<dbReference type="CD-CODE" id="6209F224">
    <property type="entry name" value="Synthetic Condensate 000281"/>
</dbReference>
<dbReference type="CD-CODE" id="67BDA0FF">
    <property type="entry name" value="Synthetic Condensate 000032"/>
</dbReference>
<dbReference type="CD-CODE" id="6DA31C6B">
    <property type="entry name" value="Synthetic Condensate 000011"/>
</dbReference>
<dbReference type="CD-CODE" id="6F24707C">
    <property type="entry name" value="Cajal body"/>
</dbReference>
<dbReference type="CD-CODE" id="77264BD3">
    <property type="entry name" value="Synthetic Condensate 000258"/>
</dbReference>
<dbReference type="CD-CODE" id="7A2955EF">
    <property type="entry name" value="Synthetic Condensate 000304"/>
</dbReference>
<dbReference type="CD-CODE" id="804901D1">
    <property type="entry name" value="Nuclear speckle"/>
</dbReference>
<dbReference type="CD-CODE" id="80EB2636">
    <property type="entry name" value="Synthetic Condensate 000255"/>
</dbReference>
<dbReference type="CD-CODE" id="89D22CC2">
    <property type="entry name" value="Synthetic Condensate 000270"/>
</dbReference>
<dbReference type="CD-CODE" id="91857CE7">
    <property type="entry name" value="Nucleolus"/>
</dbReference>
<dbReference type="CD-CODE" id="943B2789">
    <property type="entry name" value="Synthetic Condensate 000008"/>
</dbReference>
<dbReference type="CD-CODE" id="94A6FFB4">
    <property type="entry name" value="Synthetic Condensate 000253"/>
</dbReference>
<dbReference type="CD-CODE" id="950D9077">
    <property type="entry name" value="Synthetic Condensate 000273"/>
</dbReference>
<dbReference type="CD-CODE" id="9568789E">
    <property type="entry name" value="Synthetic Condensate 000022"/>
</dbReference>
<dbReference type="CD-CODE" id="95FADA74">
    <property type="entry name" value="Synthetic Condensate 000026"/>
</dbReference>
<dbReference type="CD-CODE" id="979E1F4B">
    <property type="entry name" value="Synthetic Condensate 000033"/>
</dbReference>
<dbReference type="CD-CODE" id="9A9D7F4D">
    <property type="entry name" value="Synthetic Condensate 000014"/>
</dbReference>
<dbReference type="CD-CODE" id="9B5E283A">
    <property type="entry name" value="Synthetic Condensate 000373"/>
</dbReference>
<dbReference type="CD-CODE" id="9C0C01E2">
    <property type="entry name" value="Synthetic Condensate 000254"/>
</dbReference>
<dbReference type="CD-CODE" id="A0DCDA94">
    <property type="entry name" value="DNA damage foci"/>
</dbReference>
<dbReference type="CD-CODE" id="A3F53DF0">
    <property type="entry name" value="Synthetic Condensate 000272"/>
</dbReference>
<dbReference type="CD-CODE" id="B8725CFA">
    <property type="entry name" value="Synthetic Condensate 000007"/>
</dbReference>
<dbReference type="CD-CODE" id="BC3C46DC">
    <property type="entry name" value="Synthetic Condensate 000257"/>
</dbReference>
<dbReference type="CD-CODE" id="C22D95C0">
    <property type="entry name" value="Synthetic Condensate 000013"/>
</dbReference>
<dbReference type="CD-CODE" id="CEC93CD4">
    <property type="entry name" value="Synthetic Condensate 000048"/>
</dbReference>
<dbReference type="CD-CODE" id="D1F4711B">
    <property type="entry name" value="PARP1-DNA condensate"/>
</dbReference>
<dbReference type="CD-CODE" id="D8E9712B">
    <property type="entry name" value="Neuronal RNP granule"/>
</dbReference>
<dbReference type="CD-CODE" id="DEE660B4">
    <property type="entry name" value="Stress granule"/>
</dbReference>
<dbReference type="CD-CODE" id="E1879998">
    <property type="entry name" value="Synthetic Condensate 000375"/>
</dbReference>
<dbReference type="CD-CODE" id="EBDFEA1F">
    <property type="entry name" value="Synthetic Condensate 000296"/>
</dbReference>
<dbReference type="CD-CODE" id="F50842E4">
    <property type="entry name" value="Synthetic Condensate 000357"/>
</dbReference>
<dbReference type="CD-CODE" id="F85A2E29">
    <property type="entry name" value="IMP1 RNP granule"/>
</dbReference>
<dbReference type="CD-CODE" id="FB44DE0F">
    <property type="entry name" value="FUS peptide aa 37-97"/>
</dbReference>
<dbReference type="CD-CODE" id="FF78ADB9">
    <property type="entry name" value="Synthetic Condensate 000050"/>
</dbReference>
<dbReference type="ChiTaRS" id="FUS">
    <property type="organism name" value="human"/>
</dbReference>
<dbReference type="EvolutionaryTrace" id="P35637"/>
<dbReference type="GeneWiki" id="FUS"/>
<dbReference type="GenomeRNAi" id="2521"/>
<dbReference type="Pharos" id="P35637">
    <property type="development level" value="Tbio"/>
</dbReference>
<dbReference type="PRO" id="PR:P35637"/>
<dbReference type="Proteomes" id="UP000005640">
    <property type="component" value="Chromosome 16"/>
</dbReference>
<dbReference type="RNAct" id="P35637">
    <property type="molecule type" value="protein"/>
</dbReference>
<dbReference type="Bgee" id="ENSG00000089280">
    <property type="expression patterns" value="Expressed in right testis and 213 other cell types or tissues"/>
</dbReference>
<dbReference type="ExpressionAtlas" id="P35637">
    <property type="expression patterns" value="baseline and differential"/>
</dbReference>
<dbReference type="GO" id="GO:0098982">
    <property type="term" value="C:GABA-ergic synapse"/>
    <property type="evidence" value="ECO:0007669"/>
    <property type="project" value="Ensembl"/>
</dbReference>
<dbReference type="GO" id="GO:0098978">
    <property type="term" value="C:glutamatergic synapse"/>
    <property type="evidence" value="ECO:0007669"/>
    <property type="project" value="Ensembl"/>
</dbReference>
<dbReference type="GO" id="GO:0043232">
    <property type="term" value="C:intracellular membraneless organelle"/>
    <property type="evidence" value="ECO:0000314"/>
    <property type="project" value="DisProt"/>
</dbReference>
<dbReference type="GO" id="GO:0005654">
    <property type="term" value="C:nucleoplasm"/>
    <property type="evidence" value="ECO:0000314"/>
    <property type="project" value="HPA"/>
</dbReference>
<dbReference type="GO" id="GO:0005634">
    <property type="term" value="C:nucleus"/>
    <property type="evidence" value="ECO:0000314"/>
    <property type="project" value="UniProtKB"/>
</dbReference>
<dbReference type="GO" id="GO:0099524">
    <property type="term" value="C:postsynaptic cytosol"/>
    <property type="evidence" value="ECO:0007669"/>
    <property type="project" value="Ensembl"/>
</dbReference>
<dbReference type="GO" id="GO:0099523">
    <property type="term" value="C:presynaptic cytosol"/>
    <property type="evidence" value="ECO:0007669"/>
    <property type="project" value="Ensembl"/>
</dbReference>
<dbReference type="GO" id="GO:0003682">
    <property type="term" value="F:chromatin binding"/>
    <property type="evidence" value="ECO:0000314"/>
    <property type="project" value="UniProtKB"/>
</dbReference>
<dbReference type="GO" id="GO:0003677">
    <property type="term" value="F:DNA binding"/>
    <property type="evidence" value="ECO:0007669"/>
    <property type="project" value="UniProtKB-KW"/>
</dbReference>
<dbReference type="GO" id="GO:0042802">
    <property type="term" value="F:identical protein binding"/>
    <property type="evidence" value="ECO:0000353"/>
    <property type="project" value="IntAct"/>
</dbReference>
<dbReference type="GO" id="GO:0140693">
    <property type="term" value="F:molecular condensate scaffold activity"/>
    <property type="evidence" value="ECO:0000314"/>
    <property type="project" value="DisProt"/>
</dbReference>
<dbReference type="GO" id="GO:0003730">
    <property type="term" value="F:mRNA 3'-UTR binding"/>
    <property type="evidence" value="ECO:0007669"/>
    <property type="project" value="Ensembl"/>
</dbReference>
<dbReference type="GO" id="GO:0003723">
    <property type="term" value="F:RNA binding"/>
    <property type="evidence" value="ECO:0000314"/>
    <property type="project" value="MGI"/>
</dbReference>
<dbReference type="GO" id="GO:0003713">
    <property type="term" value="F:transcription coactivator activity"/>
    <property type="evidence" value="ECO:0000314"/>
    <property type="project" value="CACAO"/>
</dbReference>
<dbReference type="GO" id="GO:0003712">
    <property type="term" value="F:transcription coregulator activity"/>
    <property type="evidence" value="ECO:0000318"/>
    <property type="project" value="GO_Central"/>
</dbReference>
<dbReference type="GO" id="GO:0008270">
    <property type="term" value="F:zinc ion binding"/>
    <property type="evidence" value="ECO:0007669"/>
    <property type="project" value="UniProtKB-KW"/>
</dbReference>
<dbReference type="GO" id="GO:1990000">
    <property type="term" value="P:amyloid fibril formation"/>
    <property type="evidence" value="ECO:0000314"/>
    <property type="project" value="DisProt"/>
</dbReference>
<dbReference type="GO" id="GO:0140694">
    <property type="term" value="P:membraneless organelle assembly"/>
    <property type="evidence" value="ECO:0000314"/>
    <property type="project" value="DisProt"/>
</dbReference>
<dbReference type="GO" id="GO:0048255">
    <property type="term" value="P:mRNA stabilization"/>
    <property type="evidence" value="ECO:0000314"/>
    <property type="project" value="MGI"/>
</dbReference>
<dbReference type="GO" id="GO:1905168">
    <property type="term" value="P:positive regulation of double-strand break repair via homologous recombination"/>
    <property type="evidence" value="ECO:0000314"/>
    <property type="project" value="UniProtKB"/>
</dbReference>
<dbReference type="GO" id="GO:0051260">
    <property type="term" value="P:protein homooligomerization"/>
    <property type="evidence" value="ECO:0000314"/>
    <property type="project" value="UniProtKB"/>
</dbReference>
<dbReference type="GO" id="GO:0006355">
    <property type="term" value="P:regulation of DNA-templated transcription"/>
    <property type="evidence" value="ECO:0000314"/>
    <property type="project" value="UniProtKB"/>
</dbReference>
<dbReference type="GO" id="GO:0043484">
    <property type="term" value="P:regulation of RNA splicing"/>
    <property type="evidence" value="ECO:0000314"/>
    <property type="project" value="UniProtKB"/>
</dbReference>
<dbReference type="GO" id="GO:0006357">
    <property type="term" value="P:regulation of transcription by RNA polymerase II"/>
    <property type="evidence" value="ECO:0000314"/>
    <property type="project" value="UniProtKB"/>
</dbReference>
<dbReference type="GO" id="GO:0008380">
    <property type="term" value="P:RNA splicing"/>
    <property type="evidence" value="ECO:0000314"/>
    <property type="project" value="UniProtKB"/>
</dbReference>
<dbReference type="CDD" id="cd12535">
    <property type="entry name" value="RRM_FUS_TAF15"/>
    <property type="match status" value="1"/>
</dbReference>
<dbReference type="DisProt" id="DP01102"/>
<dbReference type="FunFam" id="4.10.1060.10:FF:000002">
    <property type="entry name" value="RNA-binding protein EWS isoform 1"/>
    <property type="match status" value="1"/>
</dbReference>
<dbReference type="FunFam" id="3.30.70.330:FF:000242">
    <property type="entry name" value="RNA-binding protein FUS isoform X1"/>
    <property type="match status" value="1"/>
</dbReference>
<dbReference type="Gene3D" id="3.30.70.330">
    <property type="match status" value="1"/>
</dbReference>
<dbReference type="Gene3D" id="4.10.1060.10">
    <property type="entry name" value="Zinc finger, RanBP2-type"/>
    <property type="match status" value="1"/>
</dbReference>
<dbReference type="IDEAL" id="IID00451"/>
<dbReference type="InterPro" id="IPR012677">
    <property type="entry name" value="Nucleotide-bd_a/b_plait_sf"/>
</dbReference>
<dbReference type="InterPro" id="IPR035979">
    <property type="entry name" value="RBD_domain_sf"/>
</dbReference>
<dbReference type="InterPro" id="IPR000504">
    <property type="entry name" value="RRM_dom"/>
</dbReference>
<dbReference type="InterPro" id="IPR034870">
    <property type="entry name" value="TET_fam"/>
</dbReference>
<dbReference type="InterPro" id="IPR001876">
    <property type="entry name" value="Znf_RanBP2"/>
</dbReference>
<dbReference type="InterPro" id="IPR036443">
    <property type="entry name" value="Znf_RanBP2_sf"/>
</dbReference>
<dbReference type="PANTHER" id="PTHR23238">
    <property type="entry name" value="RNA BINDING PROTEIN"/>
    <property type="match status" value="1"/>
</dbReference>
<dbReference type="Pfam" id="PF00076">
    <property type="entry name" value="RRM_1"/>
    <property type="match status" value="1"/>
</dbReference>
<dbReference type="Pfam" id="PF00641">
    <property type="entry name" value="Zn_ribbon_RanBP"/>
    <property type="match status" value="1"/>
</dbReference>
<dbReference type="SMART" id="SM00360">
    <property type="entry name" value="RRM"/>
    <property type="match status" value="1"/>
</dbReference>
<dbReference type="SMART" id="SM00547">
    <property type="entry name" value="ZnF_RBZ"/>
    <property type="match status" value="1"/>
</dbReference>
<dbReference type="SUPFAM" id="SSF90209">
    <property type="entry name" value="Ran binding protein zinc finger-like"/>
    <property type="match status" value="1"/>
</dbReference>
<dbReference type="SUPFAM" id="SSF54928">
    <property type="entry name" value="RNA-binding domain, RBD"/>
    <property type="match status" value="1"/>
</dbReference>
<dbReference type="PROSITE" id="PS50102">
    <property type="entry name" value="RRM"/>
    <property type="match status" value="1"/>
</dbReference>
<dbReference type="PROSITE" id="PS01358">
    <property type="entry name" value="ZF_RANBP2_1"/>
    <property type="match status" value="1"/>
</dbReference>
<dbReference type="PROSITE" id="PS50199">
    <property type="entry name" value="ZF_RANBP2_2"/>
    <property type="match status" value="1"/>
</dbReference>
<keyword id="KW-0002">3D-structure</keyword>
<keyword id="KW-0025">Alternative splicing</keyword>
<keyword id="KW-0036">Amyotrophic lateral sclerosis</keyword>
<keyword id="KW-0160">Chromosomal rearrangement</keyword>
<keyword id="KW-0903">Direct protein sequencing</keyword>
<keyword id="KW-0225">Disease variant</keyword>
<keyword id="KW-0238">DNA-binding</keyword>
<keyword id="KW-1017">Isopeptide bond</keyword>
<keyword id="KW-0479">Metal-binding</keyword>
<keyword id="KW-0488">Methylation</keyword>
<keyword id="KW-0523">Neurodegeneration</keyword>
<keyword id="KW-0539">Nucleus</keyword>
<keyword id="KW-0597">Phosphoprotein</keyword>
<keyword id="KW-1267">Proteomics identification</keyword>
<keyword id="KW-0656">Proto-oncogene</keyword>
<keyword id="KW-1185">Reference proteome</keyword>
<keyword id="KW-0677">Repeat</keyword>
<keyword id="KW-0694">RNA-binding</keyword>
<keyword id="KW-0832">Ubl conjugation</keyword>
<keyword id="KW-0862">Zinc</keyword>
<keyword id="KW-0863">Zinc-finger</keyword>
<organism>
    <name type="scientific">Homo sapiens</name>
    <name type="common">Human</name>
    <dbReference type="NCBI Taxonomy" id="9606"/>
    <lineage>
        <taxon>Eukaryota</taxon>
        <taxon>Metazoa</taxon>
        <taxon>Chordata</taxon>
        <taxon>Craniata</taxon>
        <taxon>Vertebrata</taxon>
        <taxon>Euteleostomi</taxon>
        <taxon>Mammalia</taxon>
        <taxon>Eutheria</taxon>
        <taxon>Euarchontoglires</taxon>
        <taxon>Primates</taxon>
        <taxon>Haplorrhini</taxon>
        <taxon>Catarrhini</taxon>
        <taxon>Hominidae</taxon>
        <taxon>Homo</taxon>
    </lineage>
</organism>
<protein>
    <recommendedName>
        <fullName>RNA-binding protein FUS</fullName>
    </recommendedName>
    <alternativeName>
        <fullName>75 kDa DNA-pairing protein</fullName>
    </alternativeName>
    <alternativeName>
        <fullName>Oncogene FUS</fullName>
    </alternativeName>
    <alternativeName>
        <fullName>Oncogene TLS</fullName>
    </alternativeName>
    <alternativeName>
        <fullName>POMp75</fullName>
    </alternativeName>
    <alternativeName>
        <fullName>Translocated in liposarcoma protein</fullName>
    </alternativeName>
</protein>
<name>FUS_HUMAN</name>
<sequence>MASNDYTQQATQSYGAYPTQPGQGYSQQSSQPYGQQSYSGYSQSTDTSGYGQSSYSSYGQSQNTGYGTQSTPQGYGSTGGYGSSQSSQSSYGQQSSYPGYGQQPAPSSTSGSYGSSSQSSSYGQPQSGSYSQQPSYGGQQQSYGQQQSYNPPQGYGQQNQYNSSSGGGGGGGGGGNYGQDQSSMSSGGGSGGGYGNQDQSGGGGSGGYGQQDRGGRGRGGSGGGGGGGGGGYNRSSGGYEPRGRGGGRGGRGGMGGSDRGGFNKFGGPRDQGSRHDSEQDNSDNNTIFVQGLGENVTIESVADYFKQIGIIKTNKKTGQPMINLYTDRETGKLKGEATVSFDDPPSAKAAIDWFDGKEFSGNPIKVSFATRRADFNRGGGNGRGGRGRGGPMGRGGYGGGGSGGGGRGGFPSGGGGGGGQQRAGDWKCPNPTCENMNFSWRNECNQCKAPKPDGPGGGPGGSHMGGNYGDDRRGGRGGYDRGGYRGRGGDRGGFRGGRGGGDRGGFGPGKMDSRGEHRQDRRERPY</sequence>
<proteinExistence type="evidence at protein level"/>
<evidence type="ECO:0000250" key="1">
    <source>
        <dbReference type="UniProtKB" id="P56959"/>
    </source>
</evidence>
<evidence type="ECO:0000255" key="2">
    <source>
        <dbReference type="PROSITE-ProRule" id="PRU00176"/>
    </source>
</evidence>
<evidence type="ECO:0000255" key="3">
    <source>
        <dbReference type="PROSITE-ProRule" id="PRU00322"/>
    </source>
</evidence>
<evidence type="ECO:0000256" key="4">
    <source>
        <dbReference type="SAM" id="MobiDB-lite"/>
    </source>
</evidence>
<evidence type="ECO:0000269" key="5">
    <source>
    </source>
</evidence>
<evidence type="ECO:0000269" key="6">
    <source>
    </source>
</evidence>
<evidence type="ECO:0000269" key="7">
    <source>
    </source>
</evidence>
<evidence type="ECO:0000269" key="8">
    <source>
    </source>
</evidence>
<evidence type="ECO:0000269" key="9">
    <source>
    </source>
</evidence>
<evidence type="ECO:0000269" key="10">
    <source>
    </source>
</evidence>
<evidence type="ECO:0000269" key="11">
    <source>
    </source>
</evidence>
<evidence type="ECO:0000269" key="12">
    <source>
    </source>
</evidence>
<evidence type="ECO:0000269" key="13">
    <source>
    </source>
</evidence>
<evidence type="ECO:0000269" key="14">
    <source>
    </source>
</evidence>
<evidence type="ECO:0000269" key="15">
    <source>
    </source>
</evidence>
<evidence type="ECO:0000269" key="16">
    <source>
    </source>
</evidence>
<evidence type="ECO:0000269" key="17">
    <source>
    </source>
</evidence>
<evidence type="ECO:0000269" key="18">
    <source>
    </source>
</evidence>
<evidence type="ECO:0000269" key="19">
    <source>
    </source>
</evidence>
<evidence type="ECO:0000269" key="20">
    <source>
    </source>
</evidence>
<evidence type="ECO:0000269" key="21">
    <source>
    </source>
</evidence>
<evidence type="ECO:0000269" key="22">
    <source>
    </source>
</evidence>
<evidence type="ECO:0000269" key="23">
    <source>
    </source>
</evidence>
<evidence type="ECO:0000269" key="24">
    <source>
    </source>
</evidence>
<evidence type="ECO:0000269" key="25">
    <source>
    </source>
</evidence>
<evidence type="ECO:0000269" key="26">
    <source>
    </source>
</evidence>
<evidence type="ECO:0000269" key="27">
    <source>
    </source>
</evidence>
<evidence type="ECO:0000269" key="28">
    <source>
    </source>
</evidence>
<evidence type="ECO:0000269" key="29">
    <source>
    </source>
</evidence>
<evidence type="ECO:0000303" key="30">
    <source>
    </source>
</evidence>
<evidence type="ECO:0000305" key="31"/>
<evidence type="ECO:0007744" key="32">
    <source>
    </source>
</evidence>
<evidence type="ECO:0007744" key="33">
    <source>
    </source>
</evidence>
<evidence type="ECO:0007744" key="34">
    <source>
    </source>
</evidence>
<evidence type="ECO:0007744" key="35">
    <source>
    </source>
</evidence>
<evidence type="ECO:0007744" key="36">
    <source>
    </source>
</evidence>
<evidence type="ECO:0007829" key="37">
    <source>
        <dbReference type="PDB" id="2LA6"/>
    </source>
</evidence>
<evidence type="ECO:0007829" key="38">
    <source>
        <dbReference type="PDB" id="2LCW"/>
    </source>
</evidence>
<evidence type="ECO:0007829" key="39">
    <source>
        <dbReference type="PDB" id="4FDD"/>
    </source>
</evidence>
<evidence type="ECO:0007829" key="40">
    <source>
        <dbReference type="PDB" id="5W3N"/>
    </source>
</evidence>
<evidence type="ECO:0007829" key="41">
    <source>
        <dbReference type="PDB" id="6G99"/>
    </source>
</evidence>
<evidence type="ECO:0007829" key="42">
    <source>
        <dbReference type="PDB" id="6GBM"/>
    </source>
</evidence>
<evidence type="ECO:0007829" key="43">
    <source>
        <dbReference type="PDB" id="6SNJ"/>
    </source>
</evidence>
<evidence type="ECO:0007829" key="44">
    <source>
        <dbReference type="PDB" id="6XFM"/>
    </source>
</evidence>
<evidence type="ECO:0007829" key="45">
    <source>
        <dbReference type="PDB" id="7VQQ"/>
    </source>
</evidence>
<accession>P35637</accession>
<accession>Q9H4A8</accession>
<gene>
    <name type="primary">FUS</name>
    <name type="synonym">TLS</name>
</gene>
<reference key="1">
    <citation type="journal article" date="1993" name="Nature">
        <title>Fusion of CHOP to a novel RNA-binding protein in human myxoid liposarcoma.</title>
        <authorList>
            <person name="Crozat A."/>
            <person name="Aman P."/>
            <person name="Mandahl N."/>
            <person name="Ron D."/>
        </authorList>
    </citation>
    <scope>NUCLEOTIDE SEQUENCE [MRNA] (ISOFORM LONG)</scope>
</reference>
<reference key="2">
    <citation type="journal article" date="1993" name="Nat. Genet.">
        <title>Fusion of the dominant negative transcription regulator CHOP with a novel gene FUS by translocation t(12;16) in malignant liposarcoma.</title>
        <authorList>
            <person name="Rabbitts T.H."/>
            <person name="Forster A."/>
            <person name="Larson R."/>
            <person name="Nathan P."/>
        </authorList>
    </citation>
    <scope>NUCLEOTIDE SEQUENCE [MRNA] (ISOFORM SHORT)</scope>
    <scope>CHROMOSOMAL TRANSLOCATION WITH DDIT3</scope>
</reference>
<reference key="3">
    <citation type="journal article" date="1998" name="Gene">
        <title>Genomic structure of the human RBP56/hTAFII68 and FUS/TLS genes.</title>
        <authorList>
            <person name="Morohoshi F."/>
            <person name="Ootsuka Y."/>
            <person name="Arai K."/>
            <person name="Ichikawa H."/>
            <person name="Mitani S."/>
            <person name="Munakata N."/>
            <person name="Ohki M."/>
        </authorList>
    </citation>
    <scope>NUCLEOTIDE SEQUENCE [GENOMIC DNA] (ISOFORMS LONG AND SHORT)</scope>
</reference>
<reference key="4">
    <citation type="journal article" date="2004" name="Nature">
        <title>The sequence and analysis of duplication-rich human chromosome 16.</title>
        <authorList>
            <person name="Martin J."/>
            <person name="Han C."/>
            <person name="Gordon L.A."/>
            <person name="Terry A."/>
            <person name="Prabhakar S."/>
            <person name="She X."/>
            <person name="Xie G."/>
            <person name="Hellsten U."/>
            <person name="Chan Y.M."/>
            <person name="Altherr M."/>
            <person name="Couronne O."/>
            <person name="Aerts A."/>
            <person name="Bajorek E."/>
            <person name="Black S."/>
            <person name="Blumer H."/>
            <person name="Branscomb E."/>
            <person name="Brown N.C."/>
            <person name="Bruno W.J."/>
            <person name="Buckingham J.M."/>
            <person name="Callen D.F."/>
            <person name="Campbell C.S."/>
            <person name="Campbell M.L."/>
            <person name="Campbell E.W."/>
            <person name="Caoile C."/>
            <person name="Challacombe J.F."/>
            <person name="Chasteen L.A."/>
            <person name="Chertkov O."/>
            <person name="Chi H.C."/>
            <person name="Christensen M."/>
            <person name="Clark L.M."/>
            <person name="Cohn J.D."/>
            <person name="Denys M."/>
            <person name="Detter J.C."/>
            <person name="Dickson M."/>
            <person name="Dimitrijevic-Bussod M."/>
            <person name="Escobar J."/>
            <person name="Fawcett J.J."/>
            <person name="Flowers D."/>
            <person name="Fotopulos D."/>
            <person name="Glavina T."/>
            <person name="Gomez M."/>
            <person name="Gonzales E."/>
            <person name="Goodstein D."/>
            <person name="Goodwin L.A."/>
            <person name="Grady D.L."/>
            <person name="Grigoriev I."/>
            <person name="Groza M."/>
            <person name="Hammon N."/>
            <person name="Hawkins T."/>
            <person name="Haydu L."/>
            <person name="Hildebrand C.E."/>
            <person name="Huang W."/>
            <person name="Israni S."/>
            <person name="Jett J."/>
            <person name="Jewett P.B."/>
            <person name="Kadner K."/>
            <person name="Kimball H."/>
            <person name="Kobayashi A."/>
            <person name="Krawczyk M.-C."/>
            <person name="Leyba T."/>
            <person name="Longmire J.L."/>
            <person name="Lopez F."/>
            <person name="Lou Y."/>
            <person name="Lowry S."/>
            <person name="Ludeman T."/>
            <person name="Manohar C.F."/>
            <person name="Mark G.A."/>
            <person name="McMurray K.L."/>
            <person name="Meincke L.J."/>
            <person name="Morgan J."/>
            <person name="Moyzis R.K."/>
            <person name="Mundt M.O."/>
            <person name="Munk A.C."/>
            <person name="Nandkeshwar R.D."/>
            <person name="Pitluck S."/>
            <person name="Pollard M."/>
            <person name="Predki P."/>
            <person name="Parson-Quintana B."/>
            <person name="Ramirez L."/>
            <person name="Rash S."/>
            <person name="Retterer J."/>
            <person name="Ricke D.O."/>
            <person name="Robinson D.L."/>
            <person name="Rodriguez A."/>
            <person name="Salamov A."/>
            <person name="Saunders E.H."/>
            <person name="Scott D."/>
            <person name="Shough T."/>
            <person name="Stallings R.L."/>
            <person name="Stalvey M."/>
            <person name="Sutherland R.D."/>
            <person name="Tapia R."/>
            <person name="Tesmer J.G."/>
            <person name="Thayer N."/>
            <person name="Thompson L.S."/>
            <person name="Tice H."/>
            <person name="Torney D.C."/>
            <person name="Tran-Gyamfi M."/>
            <person name="Tsai M."/>
            <person name="Ulanovsky L.E."/>
            <person name="Ustaszewska A."/>
            <person name="Vo N."/>
            <person name="White P.S."/>
            <person name="Williams A.L."/>
            <person name="Wills P.L."/>
            <person name="Wu J.-R."/>
            <person name="Wu K."/>
            <person name="Yang J."/>
            <person name="DeJong P."/>
            <person name="Bruce D."/>
            <person name="Doggett N.A."/>
            <person name="Deaven L."/>
            <person name="Schmutz J."/>
            <person name="Grimwood J."/>
            <person name="Richardson P."/>
            <person name="Rokhsar D.S."/>
            <person name="Eichler E.E."/>
            <person name="Gilna P."/>
            <person name="Lucas S.M."/>
            <person name="Myers R.M."/>
            <person name="Rubin E.M."/>
            <person name="Pennacchio L.A."/>
        </authorList>
    </citation>
    <scope>NUCLEOTIDE SEQUENCE [LARGE SCALE GENOMIC DNA]</scope>
</reference>
<reference key="5">
    <citation type="journal article" date="2004" name="Genome Res.">
        <title>The status, quality, and expansion of the NIH full-length cDNA project: the Mammalian Gene Collection (MGC).</title>
        <authorList>
            <consortium name="The MGC Project Team"/>
        </authorList>
    </citation>
    <scope>NUCLEOTIDE SEQUENCE [LARGE SCALE MRNA] (ISOFORM LONG)</scope>
    <source>
        <tissue>Lung</tissue>
        <tissue>Lymph</tissue>
    </source>
</reference>
<reference key="6">
    <citation type="journal article" date="2000" name="Cancer Genet. Cytogenet.">
        <title>Genetic characterization of angiomatoid fibrous histiocytoma identifies fusion of the FUS and ATF-1 genes induced by a chromosomal translocation involving bands 12q13 and 16p11.</title>
        <authorList>
            <person name="Waters B.L."/>
            <person name="Panagopoulos I."/>
            <person name="Allen E.F."/>
        </authorList>
    </citation>
    <scope>NUCLEOTIDE SEQUENCE [MRNA] OF 85-310</scope>
    <scope>CHROMOSOMAL TRANSLOCATION WITH ATF1</scope>
    <scope>INVOLVEMENT IN AFH</scope>
</reference>
<reference key="7">
    <citation type="journal article" date="1999" name="J. Biol. Chem.">
        <title>Human 75-kDa DNA-pairing protein is identical to the pro-oncoprotein TLS/FUS and is able to promote D-loop formation.</title>
        <authorList>
            <person name="Baechtold H."/>
            <person name="Kuroda M."/>
            <person name="Sok J."/>
            <person name="Ron D."/>
            <person name="Lopez B.S."/>
            <person name="Akhmedov A.T."/>
        </authorList>
    </citation>
    <scope>PROTEIN SEQUENCE OF 235-244; 307-312; 335-345 AND 349-357</scope>
    <scope>FUNCTION</scope>
    <scope>DNA-BINDING</scope>
</reference>
<reference key="8">
    <citation type="journal article" date="1999" name="Oncogene">
        <title>Human POMp75 is identified as the pro-oncoprotein TLF/FUS: both POMp75 and POMp100 DNA homologous pairing activities are associated to cell proliferation.</title>
        <authorList>
            <person name="Bertrand P."/>
            <person name="Akhmedov A.T."/>
            <person name="Delacote F."/>
            <person name="Durrbach A."/>
            <person name="Lopez B.S."/>
        </authorList>
    </citation>
    <scope>PROTEIN SEQUENCE OF 265-276; 317-331 AND 335-357</scope>
    <scope>IDENTIFICATION</scope>
</reference>
<reference key="9">
    <citation type="submission" date="2008-12" db="UniProtKB">
        <authorList>
            <person name="Lubec G."/>
            <person name="Chen W.-Q."/>
            <person name="Sun Y."/>
        </authorList>
    </citation>
    <scope>PROTEIN SEQUENCE OF 349-357</scope>
    <scope>IDENTIFICATION BY MASS SPECTROMETRY</scope>
    <source>
        <tissue>Fetal brain cortex</tissue>
    </source>
</reference>
<reference key="10">
    <citation type="journal article" date="1994" name="Cancer Res.">
        <title>An RNA-binding protein gene, TLS/FUS, is fused to ERG in human myeloid leukemia with t(16;21) chromosomal translocation.</title>
        <authorList>
            <person name="Ichikawa H."/>
            <person name="Shimizu K."/>
            <person name="Hayashi Y."/>
            <person name="Ohki M."/>
        </authorList>
    </citation>
    <scope>CHROMOSOMAL TRANSLOCATION WITH ERG</scope>
</reference>
<reference key="11">
    <citation type="journal article" date="1998" name="J. Biol. Chem.">
        <title>The transcriptional repressor ZFM1 interacts with and modulates the ability of EWS to activate transcription.</title>
        <authorList>
            <person name="Zhang D."/>
            <person name="Paley A.J."/>
            <person name="Childs G."/>
        </authorList>
    </citation>
    <scope>INTERACTION WITH SF1</scope>
</reference>
<reference key="12">
    <citation type="journal article" date="1998" name="J. Biol. Chem.">
        <title>Oncoprotein TLS interacts with serine-arginine proteins involved in RNA splicing.</title>
        <authorList>
            <person name="Yang L."/>
            <person name="Embree L.J."/>
            <person name="Tsai S."/>
            <person name="Hickstein D.D."/>
        </authorList>
    </citation>
    <scope>INTERACTION WITH SFRS13A</scope>
</reference>
<reference key="13">
    <citation type="journal article" date="2003" name="Anal. Chem.">
        <title>Detection of arginine dimethylated peptides by parallel precursor ion scanning mass spectrometry in positive ion mode.</title>
        <authorList>
            <person name="Rappsilber J."/>
            <person name="Friesen W.J."/>
            <person name="Paushkin S."/>
            <person name="Dreyfuss G."/>
            <person name="Mann M."/>
        </authorList>
    </citation>
    <scope>METHYLATION AT ARG-242; ARG-244; ARG-248; ARG-251; ARG-259; ARG-377; ARG-383; ARG-386; ARG-388; ARG-394; ARG-407; ARG-473; ARG-476; ARG-481; ARG-485; ARG-487; ARG-491; ARG-495; ARG-498 AND ARG-503</scope>
    <scope>IDENTIFICATION BY MASS SPECTROMETRY</scope>
</reference>
<reference key="14">
    <citation type="journal article" date="2007" name="Exp. Cell Res.">
        <title>Intracellular characterization of DDX39, a novel growth-associated RNA helicase.</title>
        <authorList>
            <person name="Sugiura T."/>
            <person name="Sakurai K."/>
            <person name="Nagano Y."/>
        </authorList>
    </citation>
    <scope>INTERACTION WITH SARNP</scope>
</reference>
<reference key="15">
    <citation type="journal article" date="2008" name="Hum. Mol. Genet.">
        <title>TDRD3, a novel Tudor domain-containing protein, localizes to cytoplasmic stress granules.</title>
        <authorList>
            <person name="Goulet I."/>
            <person name="Boisvenue S."/>
            <person name="Mokas S."/>
            <person name="Mazroui R."/>
            <person name="Cote J."/>
        </authorList>
    </citation>
    <scope>INTERACTION WITH TDRD3</scope>
</reference>
<reference key="16">
    <citation type="journal article" date="2008" name="Biochem. J.">
        <title>Identification and characterization of FUS/TLS as a new target of ATM.</title>
        <authorList>
            <person name="Gardiner M."/>
            <person name="Toth R."/>
            <person name="Vandermoere F."/>
            <person name="Morrice N.A."/>
            <person name="Rouse J."/>
        </authorList>
    </citation>
    <scope>PHOSPHORYLATION AT SER-42</scope>
</reference>
<reference key="17">
    <citation type="journal article" date="2009" name="Sci. Signal.">
        <title>Quantitative phosphoproteomic analysis of T cell receptor signaling reveals system-wide modulation of protein-protein interactions.</title>
        <authorList>
            <person name="Mayya V."/>
            <person name="Lundgren D.H."/>
            <person name="Hwang S.-I."/>
            <person name="Rezaul K."/>
            <person name="Wu L."/>
            <person name="Eng J.K."/>
            <person name="Rodionov V."/>
            <person name="Han D.K."/>
        </authorList>
    </citation>
    <scope>PHOSPHORYLATION [LARGE SCALE ANALYSIS] AT SER-277 AND THR-286</scope>
    <scope>IDENTIFICATION BY MASS SPECTROMETRY [LARGE SCALE ANALYSIS]</scope>
    <source>
        <tissue>Leukemic T-cell</tissue>
    </source>
</reference>
<reference key="18">
    <citation type="journal article" date="2011" name="BMC Syst. Biol.">
        <title>Initial characterization of the human central proteome.</title>
        <authorList>
            <person name="Burkard T.R."/>
            <person name="Planyavsky M."/>
            <person name="Kaupe I."/>
            <person name="Breitwieser F.P."/>
            <person name="Buerckstuemmer T."/>
            <person name="Bennett K.L."/>
            <person name="Superti-Furga G."/>
            <person name="Colinge J."/>
        </authorList>
    </citation>
    <scope>IDENTIFICATION BY MASS SPECTROMETRY [LARGE SCALE ANALYSIS]</scope>
</reference>
<reference key="19">
    <citation type="journal article" date="2011" name="J. Mol. Biol.">
        <title>Characterization of a family of RanBP2-type zinc fingers that can recognize single-stranded RNA.</title>
        <authorList>
            <person name="Nguyen C.D."/>
            <person name="Mansfield R.E."/>
            <person name="Leung W."/>
            <person name="Vaz P.M."/>
            <person name="Loughlin F.E."/>
            <person name="Grant R.P."/>
            <person name="Mackay J.P."/>
        </authorList>
    </citation>
    <scope>FUNCTION</scope>
</reference>
<reference key="20">
    <citation type="journal article" date="2011" name="Sci. Signal.">
        <title>System-wide temporal characterization of the proteome and phosphoproteome of human embryonic stem cell differentiation.</title>
        <authorList>
            <person name="Rigbolt K.T."/>
            <person name="Prokhorova T.A."/>
            <person name="Akimov V."/>
            <person name="Henningsen J."/>
            <person name="Johansen P.T."/>
            <person name="Kratchmarova I."/>
            <person name="Kassem M."/>
            <person name="Mann M."/>
            <person name="Olsen J.V."/>
            <person name="Blagoev B."/>
        </authorList>
    </citation>
    <scope>PHOSPHORYLATION [LARGE SCALE ANALYSIS] AT SER-221</scope>
    <scope>IDENTIFICATION BY MASS SPECTROMETRY [LARGE SCALE ANALYSIS]</scope>
</reference>
<reference key="21">
    <citation type="journal article" date="2012" name="Proc. Natl. Acad. Sci. U.S.A.">
        <title>N-terminal acetylome analyses and functional insights of the N-terminal acetyltransferase NatB.</title>
        <authorList>
            <person name="Van Damme P."/>
            <person name="Lasa M."/>
            <person name="Polevoda B."/>
            <person name="Gazquez C."/>
            <person name="Elosegui-Artola A."/>
            <person name="Kim D.S."/>
            <person name="De Juan-Pardo E."/>
            <person name="Demeyer K."/>
            <person name="Hole K."/>
            <person name="Larrea E."/>
            <person name="Timmerman E."/>
            <person name="Prieto J."/>
            <person name="Arnesen T."/>
            <person name="Sherman F."/>
            <person name="Gevaert K."/>
            <person name="Aldabe R."/>
        </authorList>
    </citation>
    <scope>IDENTIFICATION BY MASS SPECTROMETRY [LARGE SCALE ANALYSIS]</scope>
</reference>
<reference key="22">
    <citation type="journal article" date="2013" name="J. Proteome Res.">
        <title>Toward a comprehensive characterization of a human cancer cell phosphoproteome.</title>
        <authorList>
            <person name="Zhou H."/>
            <person name="Di Palma S."/>
            <person name="Preisinger C."/>
            <person name="Peng M."/>
            <person name="Polat A.N."/>
            <person name="Heck A.J."/>
            <person name="Mohammed S."/>
        </authorList>
    </citation>
    <scope>PHOSPHORYLATION [LARGE SCALE ANALYSIS] AT SER-340</scope>
    <scope>IDENTIFICATION BY MASS SPECTROMETRY [LARGE SCALE ANALYSIS]</scope>
    <source>
        <tissue>Erythroleukemia</tissue>
    </source>
</reference>
<reference key="23">
    <citation type="journal article" date="2013" name="PLoS Genet.">
        <title>ALS-associated FUS mutations result in compromised FUS alternative splicing and autoregulation.</title>
        <authorList>
            <person name="Zhou Y."/>
            <person name="Liu S."/>
            <person name="Liu G."/>
            <person name="Oztuerk A."/>
            <person name="Hicks G.G."/>
        </authorList>
    </citation>
    <scope>FUNCTION</scope>
    <scope>SUBCELLULAR LOCATION</scope>
</reference>
<reference key="24">
    <citation type="journal article" date="2014" name="Proc. Natl. Acad. Sci. U.S.A.">
        <title>Self-assembled FUS binds active chromatin and regulates gene transcription.</title>
        <authorList>
            <person name="Yang L."/>
            <person name="Gal J."/>
            <person name="Chen J."/>
            <person name="Zhu H."/>
        </authorList>
    </citation>
    <scope>FUNCTION</scope>
    <scope>SUBCELLULAR LOCATION</scope>
    <scope>SUBUNIT</scope>
    <scope>RNA-BINDING</scope>
</reference>
<reference key="25">
    <citation type="journal article" date="2014" name="J. Proteomics">
        <title>An enzyme assisted RP-RPLC approach for in-depth analysis of human liver phosphoproteome.</title>
        <authorList>
            <person name="Bian Y."/>
            <person name="Song C."/>
            <person name="Cheng K."/>
            <person name="Dong M."/>
            <person name="Wang F."/>
            <person name="Huang J."/>
            <person name="Sun D."/>
            <person name="Wang L."/>
            <person name="Ye M."/>
            <person name="Zou H."/>
        </authorList>
    </citation>
    <scope>IDENTIFICATION BY MASS SPECTROMETRY [LARGE SCALE ANALYSIS]</scope>
    <source>
        <tissue>Liver</tissue>
    </source>
</reference>
<reference key="26">
    <citation type="journal article" date="2014" name="Mol. Cell. Proteomics">
        <title>Immunoaffinity enrichment and mass spectrometry analysis of protein methylation.</title>
        <authorList>
            <person name="Guo A."/>
            <person name="Gu H."/>
            <person name="Zhou J."/>
            <person name="Mulhern D."/>
            <person name="Wang Y."/>
            <person name="Lee K.A."/>
            <person name="Yang V."/>
            <person name="Aguiar M."/>
            <person name="Kornhauser J."/>
            <person name="Jia X."/>
            <person name="Ren J."/>
            <person name="Beausoleil S.A."/>
            <person name="Silva J.C."/>
            <person name="Vemulapalli V."/>
            <person name="Bedford M.T."/>
            <person name="Comb M.J."/>
        </authorList>
    </citation>
    <scope>METHYLATION [LARGE SCALE ANALYSIS] AT ARG-216; ARG-218 AND ARG-503</scope>
    <scope>IDENTIFICATION BY MASS SPECTROMETRY [LARGE SCALE ANALYSIS]</scope>
    <source>
        <tissue>Colon carcinoma</tissue>
    </source>
</reference>
<reference key="27">
    <citation type="journal article" date="2015" name="Proteomics">
        <title>N-terminome analysis of the human mitochondrial proteome.</title>
        <authorList>
            <person name="Vaca Jacome A.S."/>
            <person name="Rabilloud T."/>
            <person name="Schaeffer-Reiss C."/>
            <person name="Rompais M."/>
            <person name="Ayoub D."/>
            <person name="Lane L."/>
            <person name="Bairoch A."/>
            <person name="Van Dorsselaer A."/>
            <person name="Carapito C."/>
        </authorList>
    </citation>
    <scope>IDENTIFICATION BY MASS SPECTROMETRY [LARGE SCALE ANALYSIS]</scope>
</reference>
<reference key="28">
    <citation type="journal article" date="2016" name="Ann. Neurol.">
        <title>A novel missense mutation of CMT2P alters transcription machinery.</title>
        <authorList>
            <person name="Hu B."/>
            <person name="Arpag S."/>
            <person name="Zuchner S."/>
            <person name="Li J."/>
        </authorList>
    </citation>
    <scope>INTERACTION WITH LRSAM1</scope>
</reference>
<reference key="29">
    <citation type="journal article" date="2015" name="Proc. Natl. Acad. Sci. U.S.A.">
        <title>FUS functions in coupling transcription to splicing by mediating an interaction between RNAP II and U1 snRNP.</title>
        <authorList>
            <person name="Yu Y."/>
            <person name="Reed R."/>
        </authorList>
    </citation>
    <scope>FUNCTION</scope>
    <scope>INTERACTION WITH SNRNP70 AND POLR2A</scope>
</reference>
<reference key="30">
    <citation type="journal article" date="2016" name="Sci. Rep.">
        <title>FUS interacts with nuclear matrix-associated protein SAFB1 as well as Matrin3 to regulate splicing and ligand-mediated transcription.</title>
        <authorList>
            <person name="Yamaguchi A."/>
            <person name="Takanashi K."/>
        </authorList>
    </citation>
    <scope>FUNCTION</scope>
    <scope>INTERACTION WITH SAFB AND MATR3</scope>
</reference>
<reference key="31">
    <citation type="journal article" date="2017" name="Nat. Struct. Mol. Biol.">
        <title>Site-specific mapping of the human SUMO proteome reveals co-modification with phosphorylation.</title>
        <authorList>
            <person name="Hendriks I.A."/>
            <person name="Lyon D."/>
            <person name="Young C."/>
            <person name="Jensen L.J."/>
            <person name="Vertegaal A.C."/>
            <person name="Nielsen M.L."/>
        </authorList>
    </citation>
    <scope>SUMOYLATION [LARGE SCALE ANALYSIS] AT LYS-334</scope>
    <scope>IDENTIFICATION BY MASS SPECTROMETRY [LARGE SCALE ANALYSIS]</scope>
</reference>
<reference key="32">
    <citation type="journal article" date="2018" name="Mol. Biol. Cell">
        <title>The prionlike domain of FUS is multiphosphorylated following DNA damage without altering nuclear localization.</title>
        <authorList>
            <person name="Rhoads S.N."/>
            <person name="Monahan Z.T."/>
            <person name="Yee D.S."/>
            <person name="Leung A.Y."/>
            <person name="Newcombe C.G."/>
            <person name="O'Meally R.N."/>
            <person name="Cole R.N."/>
            <person name="Shewmaker F.P."/>
        </authorList>
    </citation>
    <scope>PHOSPHORYLATION AT SER-26 AND SER-30</scope>
    <scope>SUBCELLULAR LOCATION</scope>
</reference>
<reference key="33">
    <citation type="journal article" date="2018" name="Mol. Biol. Cell">
        <title>The hnRNP raly regulates PRMT1 expression and interacts with the ALS-linked protein FUS: implication for reciprocal cellular localization.</title>
        <authorList>
            <person name="Gasperini L."/>
            <person name="Rossi A."/>
            <person name="Cornella N."/>
            <person name="Peroni D."/>
            <person name="Zuccotti P."/>
            <person name="Potrich V."/>
            <person name="Quattrone A."/>
            <person name="Macchi P."/>
        </authorList>
    </citation>
    <scope>INTERACTION WITH RALY</scope>
    <scope>SUBCELLULAR LOCATION</scope>
</reference>
<reference key="34">
    <citation type="submission" date="2011-05" db="PDB data bank">
        <title>Northeast structural genomics consortium target HR6430A.</title>
        <authorList>
            <consortium name="Northeast structural genomics consortium (NESG)"/>
        </authorList>
    </citation>
    <scope>STRUCTURE BY NMR OF 282-370</scope>
</reference>
<reference key="35">
    <citation type="journal article" date="2006" name="Science">
        <title>The consensus coding sequences of human breast and colorectal cancers.</title>
        <authorList>
            <person name="Sjoeblom T."/>
            <person name="Jones S."/>
            <person name="Wood L.D."/>
            <person name="Parsons D.W."/>
            <person name="Lin J."/>
            <person name="Barber T.D."/>
            <person name="Mandelker D."/>
            <person name="Leary R.J."/>
            <person name="Ptak J."/>
            <person name="Silliman N."/>
            <person name="Szabo S."/>
            <person name="Buckhaults P."/>
            <person name="Farrell C."/>
            <person name="Meeh P."/>
            <person name="Markowitz S.D."/>
            <person name="Willis J."/>
            <person name="Dawson D."/>
            <person name="Willson J.K.V."/>
            <person name="Gazdar A.F."/>
            <person name="Hartigan J."/>
            <person name="Wu L."/>
            <person name="Liu C."/>
            <person name="Parmigiani G."/>
            <person name="Park B.H."/>
            <person name="Bachman K.E."/>
            <person name="Papadopoulos N."/>
            <person name="Vogelstein B."/>
            <person name="Kinzler K.W."/>
            <person name="Velculescu V.E."/>
        </authorList>
    </citation>
    <scope>VARIANT [LARGE SCALE ANALYSIS] GLN-312</scope>
</reference>
<reference key="36">
    <citation type="journal article" date="2009" name="Science">
        <title>Mutations in the FUS/TLS gene on chromosome 16 cause familial amyotrophic lateral sclerosis.</title>
        <authorList>
            <person name="Kwiatkowski T.J. Jr."/>
            <person name="Bosco D.A."/>
            <person name="Leclerc A.L."/>
            <person name="Tamrazian E."/>
            <person name="Vanderburg C.R."/>
            <person name="Russ C."/>
            <person name="Davis A."/>
            <person name="Gilchrist J."/>
            <person name="Kasarskis E.J."/>
            <person name="Munsat T."/>
            <person name="Valdmanis P."/>
            <person name="Rouleau G.A."/>
            <person name="Hosler B.A."/>
            <person name="Cortelli P."/>
            <person name="de Jong P.J."/>
            <person name="Yoshinaga Y."/>
            <person name="Haines J.L."/>
            <person name="Pericak-Vance M.A."/>
            <person name="Yan J."/>
            <person name="Ticozzi N."/>
            <person name="Siddique T."/>
            <person name="McKenna-Yasek D."/>
            <person name="Sapp P.C."/>
            <person name="Horvitz H.R."/>
            <person name="Landers J.E."/>
            <person name="Brown R.H. Jr."/>
        </authorList>
    </citation>
    <scope>VARIANTS ALS6 CYS-244; SER-514; CYS-515; LYS-518; CYS-521; GLY-521; HIS-521; GLY-522; SER-524; THR-524 AND LEU-525</scope>
    <scope>VARIANT GLN-517</scope>
    <scope>SUBCELLULAR LOCATION</scope>
    <scope>CHARACTERIZATION OF VARIANT ALS6 GLY-521</scope>
    <scope>CHARACTERIZATION OF VARIANT GLN-517</scope>
</reference>
<reference key="37">
    <citation type="journal article" date="2009" name="Science">
        <title>Mutations in FUS, an RNA processing protein, cause familial amyotrophic lateral sclerosis type 6.</title>
        <authorList>
            <person name="Vance C."/>
            <person name="Rogelj B."/>
            <person name="Hortobagyi T."/>
            <person name="De Vos K.J."/>
            <person name="Nishimura A.L."/>
            <person name="Sreedharan J."/>
            <person name="Hu X."/>
            <person name="Smith B."/>
            <person name="Ruddy D."/>
            <person name="Wright P."/>
            <person name="Ganesalingam J."/>
            <person name="Williams K.L."/>
            <person name="Tripathi V."/>
            <person name="Al-Saraj S."/>
            <person name="Al-Chalabi A."/>
            <person name="Leigh P.N."/>
            <person name="Blair I.P."/>
            <person name="Nicholson G."/>
            <person name="de Belleroche J."/>
            <person name="Gallo J.M."/>
            <person name="Miller C.C."/>
            <person name="Shaw C.E."/>
        </authorList>
    </citation>
    <scope>VARIANTS ALS6 GLY-514; CYS-521 AND HIS-521</scope>
    <scope>SUBCELLULAR LOCATION</scope>
    <scope>CHARACTERIZATION OF VARIANTS ALS6 CYS-521 AND HIS-521</scope>
</reference>
<reference key="38">
    <citation type="journal article" date="2010" name="J. Med. Genet.">
        <title>Mutations of FUS gene in sporadic amyotrophic lateral sclerosis.</title>
        <authorList>
            <person name="Corrado L."/>
            <person name="Del Bo R."/>
            <person name="Castellotti B."/>
            <person name="Ratti A."/>
            <person name="Cereda C."/>
            <person name="Penco S."/>
            <person name="Soraru G."/>
            <person name="Carlomagno Y."/>
            <person name="Ghezzi S."/>
            <person name="Pensato V."/>
            <person name="Colombrita C."/>
            <person name="Gagliardi S."/>
            <person name="Cozzi L."/>
            <person name="Orsetti V."/>
            <person name="Mancuso M."/>
            <person name="Siciliano G."/>
            <person name="Mazzini L."/>
            <person name="Comi G.P."/>
            <person name="Gellera C."/>
            <person name="Ceroni M."/>
            <person name="D'Alfonso S."/>
            <person name="Silani V."/>
        </authorList>
    </citation>
    <scope>VARIANTS ALS6 SER-191; CYS-216; VAL-225; CYS-230; CYS-234; ASP-507 AND CYS-521</scope>
</reference>
<reference key="39">
    <citation type="journal article" date="2010" name="Neurology">
        <title>Genetic contribution of FUS to frontotemporal lobar degeneration.</title>
        <authorList>
            <person name="Van Langenhove T."/>
            <person name="van der Zee J."/>
            <person name="Sleegers K."/>
            <person name="Engelborghs S."/>
            <person name="Vandenberghe R."/>
            <person name="Gijselinck I."/>
            <person name="Van den Broeck M."/>
            <person name="Mattheijssens M."/>
            <person name="Peeters K."/>
            <person name="De Deyn P.P."/>
            <person name="Cruts M."/>
            <person name="Van Broeckhoven C."/>
        </authorList>
    </citation>
    <scope>VARIANT ALS6 HIS-521</scope>
    <scope>VARIANT VAL-254</scope>
</reference>
<reference key="40">
    <citation type="journal article" date="2012" name="Am. J. Hum. Genet.">
        <title>Exome sequencing identifies fus mutations as a cause of essential tremor.</title>
        <authorList>
            <person name="Merner N.D."/>
            <person name="Girard S.L."/>
            <person name="Catoire H."/>
            <person name="Bourassa C.V."/>
            <person name="Belzil V.V."/>
            <person name="Riviere J.B."/>
            <person name="Hince P."/>
            <person name="Levert A."/>
            <person name="Dionne-Laporte A."/>
            <person name="Spiegelman D."/>
            <person name="Noreau A."/>
            <person name="Diab S."/>
            <person name="Szuto A."/>
            <person name="Fournier H."/>
            <person name="Raelson J."/>
            <person name="Belouchi M."/>
            <person name="Panisset M."/>
            <person name="Cossette P."/>
            <person name="Dupre N."/>
            <person name="Bernard G."/>
            <person name="Chouinard S."/>
            <person name="Dion P.A."/>
            <person name="Rouleau G.A."/>
        </authorList>
    </citation>
    <scope>VARIANTS ETM4 CYS-216 AND LEU-431</scope>
</reference>
<reference key="41">
    <citation type="journal article" date="2016" name="Sci. Rep.">
        <title>Screening of SOD1, FUS and TARDBP genes in patients with amyotrophic lateral sclerosis in central-southern China.</title>
        <authorList>
            <person name="Hou L."/>
            <person name="Jiao B."/>
            <person name="Xiao T."/>
            <person name="Zhou L."/>
            <person name="Zhou Z."/>
            <person name="Du J."/>
            <person name="Yan X."/>
            <person name="Wang J."/>
            <person name="Tang B."/>
            <person name="Shen L."/>
        </authorList>
    </citation>
    <scope>VARIANTS ALS6 HIS-521 AND TYR-526 EXT</scope>
</reference>